<proteinExistence type="evidence at protein level"/>
<name>TNR6_HUMAN</name>
<protein>
    <recommendedName>
        <fullName>Tumor necrosis factor receptor superfamily member 6</fullName>
    </recommendedName>
    <alternativeName>
        <fullName>Apo-1 antigen</fullName>
    </alternativeName>
    <alternativeName>
        <fullName>Apoptosis-mediating surface antigen FAS</fullName>
    </alternativeName>
    <alternativeName>
        <fullName>FASLG receptor</fullName>
    </alternativeName>
    <cdAntigenName>CD95</cdAntigenName>
</protein>
<feature type="signal peptide" evidence="4">
    <location>
        <begin position="1"/>
        <end position="25"/>
    </location>
</feature>
<feature type="chain" id="PRO_0000034563" description="Tumor necrosis factor receptor superfamily member 6">
    <location>
        <begin position="26"/>
        <end position="335"/>
    </location>
</feature>
<feature type="topological domain" description="Extracellular" evidence="4">
    <location>
        <begin position="26"/>
        <end position="173"/>
    </location>
</feature>
<feature type="transmembrane region" description="Helical" evidence="4">
    <location>
        <begin position="174"/>
        <end position="190"/>
    </location>
</feature>
<feature type="topological domain" description="Cytoplasmic" evidence="4">
    <location>
        <begin position="191"/>
        <end position="335"/>
    </location>
</feature>
<feature type="repeat" description="TNFR-Cys 1">
    <location>
        <begin position="47"/>
        <end position="83"/>
    </location>
</feature>
<feature type="repeat" description="TNFR-Cys 2">
    <location>
        <begin position="84"/>
        <end position="127"/>
    </location>
</feature>
<feature type="repeat" description="TNFR-Cys 3">
    <location>
        <begin position="128"/>
        <end position="166"/>
    </location>
</feature>
<feature type="domain" description="Death" evidence="5">
    <location>
        <begin position="230"/>
        <end position="314"/>
    </location>
</feature>
<feature type="region of interest" description="Interaction with HIPK3" evidence="1">
    <location>
        <begin position="212"/>
        <end position="317"/>
    </location>
</feature>
<feature type="region of interest" description="Interaction with CALM" evidence="23">
    <location>
        <begin position="230"/>
        <end position="254"/>
    </location>
</feature>
<feature type="modified residue" description="Phosphoserine" evidence="46">
    <location>
        <position position="209"/>
    </location>
</feature>
<feature type="modified residue" description="Phosphothreonine" evidence="2">
    <location>
        <position position="214"/>
    </location>
</feature>
<feature type="modified residue" description="Phosphoserine" evidence="47">
    <location>
        <position position="225"/>
    </location>
</feature>
<feature type="lipid moiety-binding region" description="S-palmitoyl cysteine" evidence="24">
    <location>
        <position position="199"/>
    </location>
</feature>
<feature type="glycosylation site" description="O-linked (GalNAc...) threonine" evidence="22">
    <location>
        <position position="28"/>
    </location>
</feature>
<feature type="glycosylation site" description="N-linked (GlcNAc...) asparagine" evidence="19">
    <location>
        <position position="118"/>
    </location>
</feature>
<feature type="glycosylation site" description="N-linked (GlcNAc...) asparagine" evidence="4">
    <location>
        <position position="136"/>
    </location>
</feature>
<feature type="glycosylation site" description="(Microbial infection) N-beta-linked (GlcNAc) arginine" evidence="25 45">
    <location>
        <position position="250"/>
    </location>
</feature>
<feature type="disulfide bond" evidence="6">
    <location>
        <begin position="59"/>
        <end position="73"/>
    </location>
</feature>
<feature type="disulfide bond" evidence="6">
    <location>
        <begin position="63"/>
        <end position="82"/>
    </location>
</feature>
<feature type="disulfide bond" evidence="6">
    <location>
        <begin position="85"/>
        <end position="101"/>
    </location>
</feature>
<feature type="disulfide bond" evidence="6">
    <location>
        <begin position="104"/>
        <end position="119"/>
    </location>
</feature>
<feature type="disulfide bond" evidence="6">
    <location>
        <begin position="107"/>
        <end position="127"/>
    </location>
</feature>
<feature type="disulfide bond" evidence="6">
    <location>
        <begin position="129"/>
        <end position="143"/>
    </location>
</feature>
<feature type="disulfide bond" evidence="6">
    <location>
        <begin position="146"/>
        <end position="157"/>
    </location>
</feature>
<feature type="disulfide bond" evidence="6">
    <location>
        <begin position="149"/>
        <end position="165"/>
    </location>
</feature>
<feature type="splice variant" id="VSP_006481" description="In isoform 2." evidence="39 40">
    <original>GERKARDCTVNGDEPDCVPCQEGKEYTDKAHFSSKCRR</original>
    <variation>DVNMESSRNAHSPATPSAKRKDPDLTWGGFVFFFCQFH</variation>
    <location>
        <begin position="66"/>
        <end position="103"/>
    </location>
</feature>
<feature type="splice variant" id="VSP_006483" description="In isoform 3." evidence="39 40">
    <original>GERKARDCTVNGDEPDCVPCQ</original>
    <variation>DVNMESSRNAHSPATPSAKRK</variation>
    <location>
        <begin position="66"/>
        <end position="86"/>
    </location>
</feature>
<feature type="splice variant" id="VSP_006484" description="In isoform 3." evidence="39 40">
    <location>
        <begin position="87"/>
        <end position="335"/>
    </location>
</feature>
<feature type="splice variant" id="VSP_006482" description="In isoform 2." evidence="39 40">
    <location>
        <begin position="104"/>
        <end position="335"/>
    </location>
</feature>
<feature type="splice variant" id="VSP_006485" description="In isoform 4." evidence="40 42">
    <original>GLEVEINCTRTQNTKCRCKPNFFCNSTVCEHCDPCTKC</original>
    <variation>DVNMESSRNAHSPATPSAKRKDPDLTWGGFVFFFCQFH</variation>
    <location>
        <begin position="112"/>
        <end position="149"/>
    </location>
</feature>
<feature type="splice variant" id="VSP_006487" description="In isoform 5." evidence="42 43">
    <original>GLEVEINCTRTQNTKCRCKPN</original>
    <variation>DVNMESSRNAHSPATPSAKRK</variation>
    <location>
        <begin position="112"/>
        <end position="132"/>
    </location>
</feature>
<feature type="splice variant" id="VSP_006488" description="In isoform 5." evidence="42 43">
    <location>
        <begin position="133"/>
        <end position="335"/>
    </location>
</feature>
<feature type="splice variant" id="VSP_006486" description="In isoform 4." evidence="40 42">
    <location>
        <begin position="150"/>
        <end position="335"/>
    </location>
</feature>
<feature type="splice variant" id="VSP_006489" description="In isoform 6." evidence="39 40">
    <location>
        <begin position="169"/>
        <end position="189"/>
    </location>
</feature>
<feature type="splice variant" id="VSP_045235" description="In isoform 7." evidence="41">
    <original>ETV</original>
    <variation>MLT</variation>
    <location>
        <begin position="218"/>
        <end position="220"/>
    </location>
</feature>
<feature type="splice variant" id="VSP_045236" description="In isoform 7." evidence="41">
    <location>
        <begin position="221"/>
        <end position="335"/>
    </location>
</feature>
<feature type="sequence variant" id="VAR_020008" description="In dbSNP:rs3218619." evidence="38">
    <original>A</original>
    <variation>T</variation>
    <location>
        <position position="16"/>
    </location>
</feature>
<feature type="sequence variant" id="VAR_013416" description="In non-Hodgkin lymphoma; somatic mutation; dbSNP:rs606231364." evidence="35">
    <original>A</original>
    <variation>T</variation>
    <location>
        <position position="25"/>
    </location>
</feature>
<feature type="sequence variant" id="VAR_013417" description="In ALPS1A; associated with autoimmune hepatitis type 2." evidence="34">
    <original>T</original>
    <variation>A</variation>
    <location>
        <position position="28"/>
    </location>
</feature>
<feature type="sequence variant" id="VAR_013418" description="In ALPS1A." evidence="37">
    <original>C</original>
    <variation>R</variation>
    <location>
        <position position="82"/>
    </location>
</feature>
<feature type="sequence variant" id="VAR_018321" description="In squamous cell carcinoma; burn-scar related; somatic mutation; dbSNP:rs121913083." evidence="12">
    <original>N</original>
    <variation>S</variation>
    <location>
        <position position="118"/>
    </location>
</feature>
<feature type="sequence variant" id="VAR_013419" description="In ALPS1A; dbSNP:rs121913078." evidence="31">
    <original>R</original>
    <variation>W</variation>
    <location>
        <position position="121"/>
    </location>
</feature>
<feature type="sequence variant" id="VAR_020009" description="In dbSNP:rs3218614." evidence="38">
    <original>T</original>
    <variation>I</variation>
    <location>
        <position position="122"/>
    </location>
</feature>
<feature type="sequence variant" id="VAR_018322" description="In squamous cell carcinoma; burn-scar related; somatic mutation; dbSNP:rs121913084." evidence="12">
    <original>C</original>
    <variation>R</variation>
    <location>
        <position position="178"/>
    </location>
</feature>
<feature type="sequence variant" id="VAR_013420" description="In non-Hodgkin lymphoma; somatic mutation; dbSNP:rs1848491059." evidence="35">
    <original>L</original>
    <variation>F</variation>
    <location>
        <position position="180"/>
    </location>
</feature>
<feature type="sequence variant" id="VAR_013421" description="In non-Hodgkin lymphoma; somatic mutation; dbSNP:rs758835365." evidence="35">
    <original>P</original>
    <variation>L</variation>
    <location>
        <position position="183"/>
    </location>
</feature>
<feature type="sequence variant" id="VAR_052347" description="In dbSNP:rs28362322.">
    <original>I</original>
    <variation>V</variation>
    <location>
        <position position="184"/>
    </location>
</feature>
<feature type="sequence variant" id="VAR_013422" description="In non-Hodgkin lymphoma; somatic mutation." evidence="35">
    <original>T</original>
    <variation>I</variation>
    <location>
        <position position="198"/>
    </location>
</feature>
<feature type="sequence variant" id="VAR_013423" description="In ALPS1A; no effect on interaction with FADD; dbSNP:rs121913079." evidence="20 31">
    <original>Y</original>
    <variation>C</variation>
    <location>
        <position position="232"/>
    </location>
</feature>
<feature type="sequence variant" id="VAR_013424" description="In ALPS1A; dbSNP:rs201072885." evidence="7">
    <original>T</original>
    <variation>K</variation>
    <location>
        <position position="241"/>
    </location>
</feature>
<feature type="sequence variant" id="VAR_013425" description="In ALPS1A; dbSNP:rs121913076." evidence="13 28">
    <original>T</original>
    <variation>P</variation>
    <location>
        <position position="241"/>
    </location>
</feature>
<feature type="sequence variant" id="VAR_065128" description="In ALPS1A." evidence="9">
    <original>V</original>
    <variation>L</variation>
    <location>
        <position position="249"/>
    </location>
</feature>
<feature type="sequence variant" id="VAR_013426" description="In ALPS1A; dbSNP:rs121913080." evidence="9 37">
    <original>R</original>
    <variation>P</variation>
    <location>
        <position position="250"/>
    </location>
</feature>
<feature type="sequence variant" id="VAR_013427" description="In ALPS1A; no effect on interaction with FADD; dbSNP:rs121913080." evidence="7 20">
    <original>R</original>
    <variation>Q</variation>
    <location>
        <position position="250"/>
    </location>
</feature>
<feature type="sequence variant" id="VAR_065129" description="In ALPS1A." evidence="9">
    <original>G</original>
    <variation>D</variation>
    <location>
        <position position="253"/>
    </location>
</feature>
<feature type="sequence variant" id="VAR_065130" description="In ALPS1A." evidence="9">
    <original>G</original>
    <variation>S</variation>
    <location>
        <position position="253"/>
    </location>
</feature>
<feature type="sequence variant" id="VAR_018323" description="In squamous cell carcinoma; burn-scar related; somatic mutation; dbSNP:rs121913082." evidence="12">
    <original>N</original>
    <variation>D</variation>
    <location>
        <position position="255"/>
    </location>
</feature>
<feature type="sequence variant" id="VAR_013428" description="In ALPS1A; loss of interaction with FADD; dbSNP:rs1848674892." evidence="20 32">
    <original>A</original>
    <variation>D</variation>
    <location>
        <position position="257"/>
    </location>
</feature>
<feature type="sequence variant" id="VAR_065131" description="In ALPS1A." evidence="9">
    <original>I</original>
    <variation>R</variation>
    <location>
        <position position="259"/>
    </location>
</feature>
<feature type="sequence variant" id="VAR_013429" description="In ALPS1A." evidence="37">
    <original>D</original>
    <variation>G</variation>
    <location>
        <position position="260"/>
    </location>
</feature>
<feature type="sequence variant" id="VAR_013431" description="In ALPS1A; also found in non-Hodgkin lymphoma; somatic mutation; loss of interaction with FADD; dbSNP:rs28929498." evidence="13 20 35 36">
    <original>D</original>
    <variation>V</variation>
    <location>
        <position position="260"/>
    </location>
</feature>
<feature type="sequence variant" id="VAR_013430" description="In ALPS1A; loss of interaction with FADD; dbSNP:rs121913086." evidence="20 30">
    <original>D</original>
    <variation>Y</variation>
    <location>
        <position position="260"/>
    </location>
</feature>
<feature type="sequence variant" id="VAR_058910" description="In ALPS1A." evidence="16">
    <original>I</original>
    <variation>S</variation>
    <location>
        <position position="262"/>
    </location>
</feature>
<feature type="sequence variant" id="VAR_013432" description="In non-Hodgkin lymphoma; somatic mutation; dbSNP:rs2119446116." evidence="35">
    <original>N</original>
    <variation>K</variation>
    <location>
        <position position="264"/>
    </location>
</feature>
<feature type="sequence variant" id="VAR_013433" description="In ALPS1A; dbSNP:rs121913081." evidence="13 37">
    <original>T</original>
    <variation>I</variation>
    <location>
        <position position="270"/>
    </location>
</feature>
<feature type="sequence variant" id="VAR_065132" description="In ALPS1A; loss of interaction with FADD." evidence="9 20">
    <original>T</original>
    <variation>K</variation>
    <location>
        <position position="270"/>
    </location>
</feature>
<feature type="sequence variant" id="VAR_013434" description="In ALPS1A; dbSNP:rs1589491089." evidence="8 13">
    <original>E</original>
    <variation>G</variation>
    <location>
        <position position="272"/>
    </location>
</feature>
<feature type="sequence variant" id="VAR_013435" description="In ALPS1A; also found in non-Hodgkin lymphoma; somatic mutation; loss of interaction with FADD." evidence="9 20 35">
    <original>E</original>
    <variation>K</variation>
    <location>
        <position position="272"/>
    </location>
</feature>
<feature type="sequence variant" id="VAR_013436" description="In non-Hodgkin lymphoma; somatic mutation; dbSNP:rs2119446626." evidence="35">
    <original>L</original>
    <variation>F</variation>
    <location>
        <position position="278"/>
    </location>
</feature>
<feature type="sequence variant" id="VAR_013437" description="In non-Hodgkin lymphoma; somatic mutation." evidence="35">
    <original>K</original>
    <variation>N</variation>
    <location>
        <position position="299"/>
    </location>
</feature>
<feature type="sequence variant" id="VAR_020942" description="In dbSNP:rs3218611." evidence="38">
    <original>T</original>
    <variation>I</variation>
    <location>
        <position position="305"/>
    </location>
</feature>
<feature type="sequence variant" id="VAR_013438" description="In ALPS1A; dbSNP:rs2119448150." evidence="32">
    <original>I</original>
    <variation>S</variation>
    <location>
        <position position="310"/>
    </location>
</feature>
<feature type="mutagenesis site" description="Loss of palmitoylation." evidence="24">
    <original>C</original>
    <variation>V</variation>
    <location>
        <position position="199"/>
    </location>
</feature>
<feature type="mutagenesis site" description="Abolished GlcNAcylation by E.coli NleB1." evidence="25">
    <original>R</original>
    <variation>A</variation>
    <location>
        <position position="250"/>
    </location>
</feature>
<feature type="mutagenesis site" description="Strongly decreased interaction with FADD." evidence="20">
    <original>R</original>
    <variation>E</variation>
    <location>
        <position position="250"/>
    </location>
</feature>
<feature type="mutagenesis site" description="Loss of interaction with FADD." evidence="20">
    <original>E</original>
    <variation>K</variation>
    <location>
        <position position="261"/>
    </location>
</feature>
<feature type="mutagenesis site" description="Loss of interaction with FADD." evidence="20">
    <original>Q</original>
    <variation>K</variation>
    <location>
        <position position="283"/>
    </location>
</feature>
<feature type="mutagenesis site" description="Strongly decreased interaction with FADD." evidence="20">
    <original>K</original>
    <variation>D</variation>
    <location>
        <position position="287"/>
    </location>
</feature>
<feature type="mutagenesis site" description="Decreased interaction with FADD." evidence="18">
    <original>Y</original>
    <variation>D</variation>
    <location>
        <position position="291"/>
    </location>
</feature>
<feature type="mutagenesis site" description="Constitutive activation. Promotes apoptosis, both in the presence and in the absence of stimulation by a ligand." evidence="18">
    <original>I</original>
    <variation>D</variation>
    <location>
        <position position="313"/>
    </location>
</feature>
<feature type="sequence conflict" description="In Ref. 11; AAR08906." evidence="44" ref="11">
    <original>L</original>
    <variation>F</variation>
    <location>
        <position position="224"/>
    </location>
</feature>
<feature type="sequence conflict" description="In Ref. 9; CAR92543." evidence="44" ref="9">
    <original>L</original>
    <variation>P</variation>
    <location>
        <position position="242"/>
    </location>
</feature>
<feature type="strand" evidence="52">
    <location>
        <begin position="67"/>
        <end position="71"/>
    </location>
</feature>
<feature type="strand" evidence="52">
    <location>
        <begin position="75"/>
        <end position="77"/>
    </location>
</feature>
<feature type="strand" evidence="52">
    <location>
        <begin position="82"/>
        <end position="84"/>
    </location>
</feature>
<feature type="turn" evidence="52">
    <location>
        <begin position="87"/>
        <end position="89"/>
    </location>
</feature>
<feature type="helix" evidence="52">
    <location>
        <begin position="109"/>
        <end position="111"/>
    </location>
</feature>
<feature type="strand" evidence="52">
    <location>
        <begin position="113"/>
        <end position="117"/>
    </location>
</feature>
<feature type="strand" evidence="52">
    <location>
        <begin position="126"/>
        <end position="129"/>
    </location>
</feature>
<feature type="strand" evidence="52">
    <location>
        <begin position="137"/>
        <end position="139"/>
    </location>
</feature>
<feature type="helix" evidence="49">
    <location>
        <begin position="174"/>
        <end position="181"/>
    </location>
</feature>
<feature type="helix" evidence="49">
    <location>
        <begin position="184"/>
        <end position="193"/>
    </location>
</feature>
<feature type="helix" evidence="50">
    <location>
        <begin position="232"/>
        <end position="242"/>
    </location>
</feature>
<feature type="turn" evidence="48">
    <location>
        <begin position="251"/>
        <end position="253"/>
    </location>
</feature>
<feature type="helix" evidence="51">
    <location>
        <begin position="256"/>
        <end position="265"/>
    </location>
</feature>
<feature type="helix" evidence="51">
    <location>
        <begin position="270"/>
        <end position="282"/>
    </location>
</feature>
<feature type="helix" evidence="51">
    <location>
        <begin position="287"/>
        <end position="319"/>
    </location>
</feature>
<feature type="helix" evidence="51">
    <location>
        <begin position="327"/>
        <end position="334"/>
    </location>
</feature>
<sequence>MLGIWTLLPLVLTSVARLSSKSVNAQVTDINSKGLELRKTVTTVETQNLEGLHHDGQFCHKPCPPGERKARDCTVNGDEPDCVPCQEGKEYTDKAHFSSKCRRCRLCDEGHGLEVEINCTRTQNTKCRCKPNFFCNSTVCEHCDPCTKCEHGIIKECTLTSNTKCKEEGSRSNLGWLCLLLLPIPLIVWVKRKEVQKTCRKHRKENQGSHESPTLNPETVAINLSDVDLSKYITTIAGVMTLSQVKGFVRKNGVNEAKIDEIKNDNVQDTAEQKVQLLRNWHQLHGKKEAYDTLIKDLKKANLCTLAEKIQTIILKDITSDSENSNFRNEIQSLV</sequence>
<keyword id="KW-0002">3D-structure</keyword>
<keyword id="KW-0025">Alternative splicing</keyword>
<keyword id="KW-0053">Apoptosis</keyword>
<keyword id="KW-0112">Calmodulin-binding</keyword>
<keyword id="KW-1003">Cell membrane</keyword>
<keyword id="KW-0903">Direct protein sequencing</keyword>
<keyword id="KW-0225">Disease variant</keyword>
<keyword id="KW-1015">Disulfide bond</keyword>
<keyword id="KW-0325">Glycoprotein</keyword>
<keyword id="KW-0449">Lipoprotein</keyword>
<keyword id="KW-0472">Membrane</keyword>
<keyword id="KW-0564">Palmitate</keyword>
<keyword id="KW-0597">Phosphoprotein</keyword>
<keyword id="KW-1267">Proteomics identification</keyword>
<keyword id="KW-0675">Receptor</keyword>
<keyword id="KW-1185">Reference proteome</keyword>
<keyword id="KW-0677">Repeat</keyword>
<keyword id="KW-0964">Secreted</keyword>
<keyword id="KW-0732">Signal</keyword>
<keyword id="KW-0812">Transmembrane</keyword>
<keyword id="KW-1133">Transmembrane helix</keyword>
<evidence type="ECO:0000250" key="1"/>
<evidence type="ECO:0000250" key="2">
    <source>
        <dbReference type="UniProtKB" id="P25446"/>
    </source>
</evidence>
<evidence type="ECO:0000250" key="3">
    <source>
        <dbReference type="UniProtKB" id="Q63199"/>
    </source>
</evidence>
<evidence type="ECO:0000255" key="4"/>
<evidence type="ECO:0000255" key="5">
    <source>
        <dbReference type="PROSITE-ProRule" id="PRU00064"/>
    </source>
</evidence>
<evidence type="ECO:0000255" key="6">
    <source>
        <dbReference type="PROSITE-ProRule" id="PRU00206"/>
    </source>
</evidence>
<evidence type="ECO:0000269" key="7">
    <source>
    </source>
</evidence>
<evidence type="ECO:0000269" key="8">
    <source>
    </source>
</evidence>
<evidence type="ECO:0000269" key="9">
    <source>
    </source>
</evidence>
<evidence type="ECO:0000269" key="10">
    <source>
    </source>
</evidence>
<evidence type="ECO:0000269" key="11">
    <source>
    </source>
</evidence>
<evidence type="ECO:0000269" key="12">
    <source>
    </source>
</evidence>
<evidence type="ECO:0000269" key="13">
    <source>
    </source>
</evidence>
<evidence type="ECO:0000269" key="14">
    <source>
    </source>
</evidence>
<evidence type="ECO:0000269" key="15">
    <source>
    </source>
</evidence>
<evidence type="ECO:0000269" key="16">
    <source>
    </source>
</evidence>
<evidence type="ECO:0000269" key="17">
    <source>
    </source>
</evidence>
<evidence type="ECO:0000269" key="18">
    <source>
    </source>
</evidence>
<evidence type="ECO:0000269" key="19">
    <source>
    </source>
</evidence>
<evidence type="ECO:0000269" key="20">
    <source>
    </source>
</evidence>
<evidence type="ECO:0000269" key="21">
    <source>
    </source>
</evidence>
<evidence type="ECO:0000269" key="22">
    <source>
    </source>
</evidence>
<evidence type="ECO:0000269" key="23">
    <source>
    </source>
</evidence>
<evidence type="ECO:0000269" key="24">
    <source>
    </source>
</evidence>
<evidence type="ECO:0000269" key="25">
    <source>
    </source>
</evidence>
<evidence type="ECO:0000269" key="26">
    <source>
    </source>
</evidence>
<evidence type="ECO:0000269" key="27">
    <source>
    </source>
</evidence>
<evidence type="ECO:0000269" key="28">
    <source>
    </source>
</evidence>
<evidence type="ECO:0000269" key="29">
    <source>
    </source>
</evidence>
<evidence type="ECO:0000269" key="30">
    <source>
    </source>
</evidence>
<evidence type="ECO:0000269" key="31">
    <source>
    </source>
</evidence>
<evidence type="ECO:0000269" key="32">
    <source>
    </source>
</evidence>
<evidence type="ECO:0000269" key="33">
    <source>
    </source>
</evidence>
<evidence type="ECO:0000269" key="34">
    <source>
    </source>
</evidence>
<evidence type="ECO:0000269" key="35">
    <source>
    </source>
</evidence>
<evidence type="ECO:0000269" key="36">
    <source>
    </source>
</evidence>
<evidence type="ECO:0000269" key="37">
    <source>
    </source>
</evidence>
<evidence type="ECO:0000269" key="38">
    <source ref="11"/>
</evidence>
<evidence type="ECO:0000303" key="39">
    <source>
    </source>
</evidence>
<evidence type="ECO:0000303" key="40">
    <source>
    </source>
</evidence>
<evidence type="ECO:0000303" key="41">
    <source>
    </source>
</evidence>
<evidence type="ECO:0000303" key="42">
    <source>
    </source>
</evidence>
<evidence type="ECO:0000303" key="43">
    <source ref="8"/>
</evidence>
<evidence type="ECO:0000305" key="44"/>
<evidence type="ECO:0000305" key="45">
    <source>
    </source>
</evidence>
<evidence type="ECO:0007744" key="46">
    <source>
    </source>
</evidence>
<evidence type="ECO:0007744" key="47">
    <source>
    </source>
</evidence>
<evidence type="ECO:0007829" key="48">
    <source>
        <dbReference type="PDB" id="1DDF"/>
    </source>
</evidence>
<evidence type="ECO:0007829" key="49">
    <source>
        <dbReference type="PDB" id="2NA7"/>
    </source>
</evidence>
<evidence type="ECO:0007829" key="50">
    <source>
        <dbReference type="PDB" id="3EWT"/>
    </source>
</evidence>
<evidence type="ECO:0007829" key="51">
    <source>
        <dbReference type="PDB" id="3EZQ"/>
    </source>
</evidence>
<evidence type="ECO:0007829" key="52">
    <source>
        <dbReference type="PDB" id="3TJE"/>
    </source>
</evidence>
<gene>
    <name type="primary">FAS</name>
    <name type="synonym">APT1</name>
    <name type="synonym">FAS1</name>
    <name type="synonym">TNFRSF6</name>
</gene>
<comment type="function">
    <text evidence="18 26 33">Receptor for TNFSF6/FASLG. The adapter molecule FADD recruits caspase CASP8 to the activated receptor. The resulting death-inducing signaling complex (DISC) performs CASP8 proteolytic activation which initiates the subsequent cascade of caspases (aspartate-specific cysteine proteases) mediating apoptosis. FAS-mediated apoptosis may have a role in the induction of peripheral tolerance, in the antigen-stimulated suicide of mature T-cells, or both. The secreted isoforms 2 to 6 block apoptosis (in vitro).</text>
</comment>
<comment type="subunit">
    <text evidence="2 3 10 11 14 17 18 21 23 27 33 34">Component of the death-induced signaling complex (DISC) composed of cell surface receptor FAS/CD95, adapter protein FADD and the CASP8 protease; recruitment of CASP8 to the complex is required for processing of CASP8 into the p18 and p10 subunits (PubMed:21109225, PubMed:9184224, PubMed:9322534). Interacts directly (via DED domain) with NOL3 (via CARD domain); inhibits death-inducing signaling complex (DISC) assembly by inhibiting the increase in FAS-FADD binding induced by FAS activation (By similarity). Binds DAXX. Interacts with HIPK3 (By similarity). Part of a complex containing HIPK3 and FADD (By similarity). Binds RIPK1 and FAIM2 (PubMed:10535980, PubMed:7538908). Interacts with BABAM2 and FEM1B (PubMed:10542291, PubMed:15465831). Interacts with CALM (PubMed:24914971). In the absence of stimulation, interacts with BIRC2, DDX3X and GSK3B. The interaction with BIRC2 and DDX3X is further enhanced upon receptor stimulation and accompanied by DDX3X and BIRC2 cleavage (PubMed:18846110).</text>
</comment>
<comment type="interaction">
    <interactant intactId="EBI-494743">
        <id>P25445</id>
    </interactant>
    <interactant intactId="EBI-397435">
        <id>P62158</id>
        <label>CALM3</label>
    </interactant>
    <organismsDiffer>false</organismsDiffer>
    <experiments>4</experiments>
</comment>
<comment type="interaction">
    <interactant intactId="EBI-494743">
        <id>P25445</id>
    </interactant>
    <interactant intactId="EBI-78060">
        <id>Q14790</id>
        <label>CASP8</label>
    </interactant>
    <organismsDiffer>false</organismsDiffer>
    <experiments>15</experiments>
</comment>
<comment type="interaction">
    <interactant intactId="EBI-494743">
        <id>P25445</id>
    </interactant>
    <interactant intactId="EBI-603614">
        <id>Q03135</id>
        <label>CAV1</label>
    </interactant>
    <organismsDiffer>false</organismsDiffer>
    <experiments>3</experiments>
</comment>
<comment type="interaction">
    <interactant intactId="EBI-494743">
        <id>P25445</id>
    </interactant>
    <interactant intactId="EBI-77321">
        <id>Q9UER7</id>
        <label>DAXX</label>
    </interactant>
    <organismsDiffer>false</organismsDiffer>
    <experiments>3</experiments>
</comment>
<comment type="interaction">
    <interactant intactId="EBI-494743">
        <id>P25445</id>
    </interactant>
    <interactant intactId="EBI-494804">
        <id>Q13158</id>
        <label>FADD</label>
    </interactant>
    <organismsDiffer>false</organismsDiffer>
    <experiments>22</experiments>
</comment>
<comment type="interaction">
    <interactant intactId="EBI-494743">
        <id>P25445</id>
    </interactant>
    <interactant intactId="EBI-494743">
        <id>P25445</id>
        <label>FAS</label>
    </interactant>
    <organismsDiffer>false</organismsDiffer>
    <experiments>3</experiments>
</comment>
<comment type="interaction">
    <interactant intactId="EBI-494743">
        <id>P25445</id>
    </interactant>
    <interactant intactId="EBI-495538">
        <id>P48023</id>
        <label>FASLG</label>
    </interactant>
    <organismsDiffer>false</organismsDiffer>
    <experiments>4</experiments>
</comment>
<comment type="interaction">
    <interactant intactId="EBI-494743">
        <id>P25445</id>
    </interactant>
    <interactant intactId="EBI-295890">
        <id>P29590</id>
        <label>PML</label>
    </interactant>
    <organismsDiffer>false</organismsDiffer>
    <experiments>4</experiments>
</comment>
<comment type="interaction">
    <interactant intactId="EBI-494743">
        <id>P25445</id>
    </interactant>
    <interactant intactId="EBI-867256">
        <id>Q15156</id>
        <label>PML-RAR</label>
    </interactant>
    <organismsDiffer>false</organismsDiffer>
    <experiments>6</experiments>
</comment>
<comment type="interaction">
    <interactant intactId="EBI-494743">
        <id>P25445</id>
    </interactant>
    <interactant intactId="EBI-355227">
        <id>Q12923</id>
        <label>PTPN13</label>
    </interactant>
    <organismsDiffer>false</organismsDiffer>
    <experiments>3</experiments>
</comment>
<comment type="interaction">
    <interactant intactId="EBI-494743">
        <id>P25445</id>
    </interactant>
    <interactant intactId="EBI-621482">
        <id>P12931</id>
        <label>SRC</label>
    </interactant>
    <organismsDiffer>false</organismsDiffer>
    <experiments>2</experiments>
</comment>
<comment type="interaction">
    <interactant intactId="EBI-494743">
        <id>P25445</id>
    </interactant>
    <interactant intactId="EBI-309164">
        <id>P12815</id>
        <label>Pdcd6</label>
    </interactant>
    <organismsDiffer>true</organismsDiffer>
    <experiments>2</experiments>
</comment>
<comment type="interaction">
    <interactant intactId="EBI-15749113">
        <id>P25445-1</id>
    </interactant>
    <interactant intactId="EBI-78060">
        <id>Q14790</id>
        <label>CASP8</label>
    </interactant>
    <organismsDiffer>false</organismsDiffer>
    <experiments>3</experiments>
</comment>
<comment type="interaction">
    <interactant intactId="EBI-15749113">
        <id>P25445-1</id>
    </interactant>
    <interactant intactId="EBI-603614">
        <id>Q03135</id>
        <label>CAV1</label>
    </interactant>
    <organismsDiffer>false</organismsDiffer>
    <experiments>3</experiments>
</comment>
<comment type="interaction">
    <interactant intactId="EBI-15749113">
        <id>P25445-1</id>
    </interactant>
    <interactant intactId="EBI-494804">
        <id>Q13158</id>
        <label>FADD</label>
    </interactant>
    <organismsDiffer>false</organismsDiffer>
    <experiments>17</experiments>
</comment>
<comment type="interaction">
    <interactant intactId="EBI-15749113">
        <id>P25445-1</id>
    </interactant>
    <interactant intactId="EBI-515331">
        <id>P07947</id>
        <label>YES1</label>
    </interactant>
    <organismsDiffer>false</organismsDiffer>
    <experiments>2</experiments>
</comment>
<comment type="subcellular location">
    <molecule>Isoform 1</molecule>
    <subcellularLocation>
        <location evidence="15 24">Cell membrane</location>
        <topology evidence="44">Single-pass type I membrane protein</topology>
    </subcellularLocation>
    <subcellularLocation>
        <location evidence="24">Membrane raft</location>
    </subcellularLocation>
</comment>
<comment type="subcellular location">
    <molecule>Isoform 2</molecule>
    <subcellularLocation>
        <location>Secreted</location>
    </subcellularLocation>
</comment>
<comment type="subcellular location">
    <molecule>Isoform 3</molecule>
    <subcellularLocation>
        <location>Secreted</location>
    </subcellularLocation>
</comment>
<comment type="subcellular location">
    <molecule>Isoform 4</molecule>
    <subcellularLocation>
        <location>Secreted</location>
    </subcellularLocation>
</comment>
<comment type="subcellular location">
    <molecule>Isoform 5</molecule>
    <subcellularLocation>
        <location>Secreted</location>
    </subcellularLocation>
</comment>
<comment type="subcellular location">
    <molecule>Isoform 6</molecule>
    <subcellularLocation>
        <location>Secreted</location>
    </subcellularLocation>
</comment>
<comment type="alternative products">
    <event type="alternative splicing"/>
    <isoform>
        <id>P25445-1</id>
        <name>1</name>
        <sequence type="displayed"/>
    </isoform>
    <isoform>
        <id>P25445-2</id>
        <name>2</name>
        <name>del2</name>
        <name>D</name>
        <sequence type="described" ref="VSP_006481 VSP_006482"/>
    </isoform>
    <isoform>
        <id>P25445-3</id>
        <name>3</name>
        <name>del3</name>
        <name>E</name>
        <sequence type="described" ref="VSP_006483 VSP_006484"/>
    </isoform>
    <isoform>
        <id>P25445-4</id>
        <name>4</name>
        <name>B</name>
        <sequence type="described" ref="VSP_006485 VSP_006486"/>
    </isoform>
    <isoform>
        <id>P25445-5</id>
        <name>5</name>
        <name>C</name>
        <sequence type="described" ref="VSP_006487 VSP_006488"/>
    </isoform>
    <isoform>
        <id>P25445-6</id>
        <name>6</name>
        <name>TMdel</name>
        <name>A</name>
        <sequence type="described" ref="VSP_006489"/>
    </isoform>
    <isoform>
        <id>P25445-7</id>
        <name>7</name>
        <name>FasExo8Del</name>
        <sequence type="described" ref="VSP_045235 VSP_045236"/>
    </isoform>
</comment>
<comment type="tissue specificity">
    <text evidence="29">Isoform 1 and isoform 6 are expressed at equal levels in resting peripheral blood mononuclear cells. After activation there is an increase in isoform 1 and decrease in the levels of isoform 6.</text>
</comment>
<comment type="domain">
    <text>Contains a death domain involved in the binding of FADD, and maybe to other cytosolic adapter proteins.</text>
</comment>
<comment type="PTM">
    <text evidence="45">(Microbial infection) Glycosylated at Arg-250 by enteropathogenic E.coli protein NleB1: arginine GlcNAcylation prevents homotypic/heterotypic death domain interactions.</text>
</comment>
<comment type="PTM">
    <text evidence="24">Palmitoylated (PubMed:25301068). Palmitoylation by ZDHHC7 prevents the lysosomal degradation of FAS regulating its expression at the plasma membrane (PubMed:25301068).</text>
</comment>
<comment type="PTM">
    <text evidence="19 22">N- and O-glycosylated. O-glycosylated with core 1 or possibly core 8 glycans.</text>
</comment>
<comment type="disease" evidence="7 8 9 13 16 20 28 30 31 32 34 36 37">
    <disease id="DI-00155">
        <name>Autoimmune lymphoproliferative syndrome 1A</name>
        <acronym>ALPS1A</acronym>
        <description>A disorder of apoptosis that manifests in early childhood and results in the accumulation of autoreactive lymphocytes. It is characterized by non-malignant lymphadenopathy with hepatosplenomegaly, and autoimmune hemolytic anemia, thrombocytopenia and neutropenia.</description>
        <dbReference type="MIM" id="601859"/>
    </disease>
    <text>The disease is caused by variants affecting the gene represented in this entry.</text>
</comment>
<comment type="miscellaneous">
    <molecule>Isoform 2</molecule>
    <text evidence="44">May be produced at very low levels due to a premature stop codon in the mRNA, leading to nonsense-mediated mRNA decay.</text>
</comment>
<comment type="miscellaneous">
    <molecule>Isoform 3</molecule>
    <text evidence="44">May be produced at very low levels due to a premature stop codon in the mRNA, leading to nonsense-mediated mRNA decay.</text>
</comment>
<comment type="miscellaneous">
    <molecule>Isoform 4</molecule>
    <text evidence="44">May be produced at very low levels due to a premature stop codon in the mRNA, leading to nonsense-mediated mRNA decay.</text>
</comment>
<comment type="miscellaneous">
    <molecule>Isoform 5</molecule>
    <text evidence="44">May be produced at very low levels due to a premature stop codon in the mRNA, leading to nonsense-mediated mRNA decay.</text>
</comment>
<comment type="miscellaneous">
    <molecule>Isoform 7</molecule>
    <text evidence="44">Dominant negative isoform, resistant to Fas-mediated apoptosis.</text>
</comment>
<comment type="online information" name="Autoimmune Lymphoproliferative Syndrome Database (ALPSbase)">
    <link uri="https://www.niaid.nih.gov/diseases-conditions/autoimmune-lymphoproliferative-syndrome-alps"/>
    <text>Mutations in TNFRSF6 causing ALPS type Ia</text>
</comment>
<reference key="1">
    <citation type="journal article" date="1991" name="Cell">
        <title>The polypeptide encoded by the cDNA for human cell surface antigen Fas can mediate apoptosis.</title>
        <authorList>
            <person name="Itoh N."/>
            <person name="Yonehara S."/>
            <person name="Ishii A."/>
            <person name="Yonehara M."/>
            <person name="Mizushima S."/>
            <person name="Sameshima M."/>
            <person name="Hase A."/>
            <person name="Seto Y."/>
            <person name="Nagata S."/>
        </authorList>
    </citation>
    <scope>NUCLEOTIDE SEQUENCE [MRNA] (ISOFORM 1)</scope>
    <scope>SUBCELLULAR LOCATION</scope>
</reference>
<reference key="2">
    <citation type="journal article" date="1992" name="J. Biol. Chem.">
        <title>Purification and molecular cloning of the APO-1 cell surface antigen, a member of the tumor necrosis factor/nerve growth factor receptor superfamily. Sequence identity with the Fas antigen.</title>
        <authorList>
            <person name="Oehm A."/>
            <person name="Behrmann I."/>
            <person name="Falk W."/>
            <person name="Pawlita M."/>
            <person name="Maier G."/>
            <person name="Klas C."/>
            <person name="Li-Weber M."/>
            <person name="Richards S."/>
            <person name="Dhein J."/>
            <person name="Trauth B.C."/>
            <person name="Ponstingl H."/>
            <person name="Krammer P.H."/>
        </authorList>
    </citation>
    <scope>NUCLEOTIDE SEQUENCE [MRNA] (ISOFORM 1)</scope>
    <scope>PROTEIN SEQUENCE OF 226-240; 269-291 AND 321-335</scope>
</reference>
<reference key="3">
    <citation type="journal article" date="1995" name="Biochem. J.">
        <title>Differential expression of human Fas mRNA species upon peripheral blood mononuclear cell activation.</title>
        <authorList>
            <person name="Liu C."/>
            <person name="Cheng J."/>
            <person name="Mountz J.D."/>
        </authorList>
    </citation>
    <scope>NUCLEOTIDE SEQUENCE [MRNA] (ISOFORMS 2; 3; 4 AND 6)</scope>
    <scope>TISSUE SPECIFICITY</scope>
</reference>
<reference key="4">
    <citation type="journal article" date="1995" name="J. Immunol.">
        <title>Three functional soluble forms of the human apoptosis-inducing Fas molecule are produced by alternative splicing.</title>
        <authorList>
            <person name="Cascino I."/>
            <person name="Fiucci G."/>
            <person name="Papoff G."/>
            <person name="Ruberti G."/>
        </authorList>
    </citation>
    <scope>NUCLEOTIDE SEQUENCE [MRNA] (ISOFORMS 1; 2; 3 AND 6)</scope>
    <scope>FUNCTION</scope>
</reference>
<reference key="5">
    <citation type="journal article" date="1996" name="J. Immunol.">
        <title>Fas/Apo-1 (CD95) receptor lacking the intracytoplasmic signaling domain protects tumor cells from Fas-mediated apoptosis.</title>
        <authorList>
            <person name="Cascino I."/>
            <person name="Papoff G."/>
            <person name="De Maria R."/>
            <person name="Testi R."/>
            <person name="Ruberti G."/>
        </authorList>
    </citation>
    <scope>NUCLEOTIDE SEQUENCE [MRNA] (ISOFORM 7)</scope>
</reference>
<reference key="6">
    <citation type="journal article" date="1996" name="J. Immunol.">
        <title>An N-terminal domain shared by Fas/Apo-1 (CD95) soluble variants prevents cell death in vitro.</title>
        <authorList>
            <person name="Papoff G."/>
            <person name="Cascino I."/>
            <person name="Eramo A."/>
            <person name="Starace G."/>
            <person name="Lynch D.H."/>
            <person name="Ruberti G."/>
        </authorList>
    </citation>
    <scope>NUCLEOTIDE SEQUENCE [MRNA] (ISOFORMS 4 AND 5)</scope>
</reference>
<reference key="7">
    <citation type="journal article" date="2007" name="Immunobiology">
        <title>Autoimmune lymphoproliferative syndrome (ALPS) in a patient with a new germline Fas gene mutation.</title>
        <authorList>
            <person name="Del-Rey M.J."/>
            <person name="Manzanares J."/>
            <person name="Bosque A."/>
            <person name="Aguilo J.I."/>
            <person name="Gomez-Rial J."/>
            <person name="Roldan E."/>
            <person name="Serrano A."/>
            <person name="Anel A."/>
            <person name="Paz-Artal E."/>
            <person name="Allende L.M."/>
        </authorList>
    </citation>
    <scope>NUCLEOTIDE SEQUENCE [MRNA] (ISOFORM 1)</scope>
    <scope>VARIANT ALPS1A SER-262</scope>
</reference>
<reference key="8">
    <citation type="submission" date="1995-06" db="EMBL/GenBank/DDBJ databases">
        <authorList>
            <person name="Schaetzlein C.E."/>
            <person name="Poehlmann R."/>
            <person name="Philippsen P."/>
            <person name="Eibel H."/>
        </authorList>
    </citation>
    <scope>NUCLEOTIDE SEQUENCE [MRNA] (ISOFORM 5)</scope>
    <source>
        <tissue>Peripheral blood lymphocyte</tissue>
    </source>
</reference>
<reference key="9">
    <citation type="submission" date="2008-10" db="EMBL/GenBank/DDBJ databases">
        <authorList>
            <person name="De La Calle-Martin O."/>
        </authorList>
    </citation>
    <scope>NUCLEOTIDE SEQUENCE [MRNA] (ISOFORM 1)</scope>
</reference>
<reference key="10">
    <citation type="journal article" date="2004" name="Nat. Genet.">
        <title>Complete sequencing and characterization of 21,243 full-length human cDNAs.</title>
        <authorList>
            <person name="Ota T."/>
            <person name="Suzuki Y."/>
            <person name="Nishikawa T."/>
            <person name="Otsuki T."/>
            <person name="Sugiyama T."/>
            <person name="Irie R."/>
            <person name="Wakamatsu A."/>
            <person name="Hayashi K."/>
            <person name="Sato H."/>
            <person name="Nagai K."/>
            <person name="Kimura K."/>
            <person name="Makita H."/>
            <person name="Sekine M."/>
            <person name="Obayashi M."/>
            <person name="Nishi T."/>
            <person name="Shibahara T."/>
            <person name="Tanaka T."/>
            <person name="Ishii S."/>
            <person name="Yamamoto J."/>
            <person name="Saito K."/>
            <person name="Kawai Y."/>
            <person name="Isono Y."/>
            <person name="Nakamura Y."/>
            <person name="Nagahari K."/>
            <person name="Murakami K."/>
            <person name="Yasuda T."/>
            <person name="Iwayanagi T."/>
            <person name="Wagatsuma M."/>
            <person name="Shiratori A."/>
            <person name="Sudo H."/>
            <person name="Hosoiri T."/>
            <person name="Kaku Y."/>
            <person name="Kodaira H."/>
            <person name="Kondo H."/>
            <person name="Sugawara M."/>
            <person name="Takahashi M."/>
            <person name="Kanda K."/>
            <person name="Yokoi T."/>
            <person name="Furuya T."/>
            <person name="Kikkawa E."/>
            <person name="Omura Y."/>
            <person name="Abe K."/>
            <person name="Kamihara K."/>
            <person name="Katsuta N."/>
            <person name="Sato K."/>
            <person name="Tanikawa M."/>
            <person name="Yamazaki M."/>
            <person name="Ninomiya K."/>
            <person name="Ishibashi T."/>
            <person name="Yamashita H."/>
            <person name="Murakawa K."/>
            <person name="Fujimori K."/>
            <person name="Tanai H."/>
            <person name="Kimata M."/>
            <person name="Watanabe M."/>
            <person name="Hiraoka S."/>
            <person name="Chiba Y."/>
            <person name="Ishida S."/>
            <person name="Ono Y."/>
            <person name="Takiguchi S."/>
            <person name="Watanabe S."/>
            <person name="Yosida M."/>
            <person name="Hotuta T."/>
            <person name="Kusano J."/>
            <person name="Kanehori K."/>
            <person name="Takahashi-Fujii A."/>
            <person name="Hara H."/>
            <person name="Tanase T.-O."/>
            <person name="Nomura Y."/>
            <person name="Togiya S."/>
            <person name="Komai F."/>
            <person name="Hara R."/>
            <person name="Takeuchi K."/>
            <person name="Arita M."/>
            <person name="Imose N."/>
            <person name="Musashino K."/>
            <person name="Yuuki H."/>
            <person name="Oshima A."/>
            <person name="Sasaki N."/>
            <person name="Aotsuka S."/>
            <person name="Yoshikawa Y."/>
            <person name="Matsunawa H."/>
            <person name="Ichihara T."/>
            <person name="Shiohata N."/>
            <person name="Sano S."/>
            <person name="Moriya S."/>
            <person name="Momiyama H."/>
            <person name="Satoh N."/>
            <person name="Takami S."/>
            <person name="Terashima Y."/>
            <person name="Suzuki O."/>
            <person name="Nakagawa S."/>
            <person name="Senoh A."/>
            <person name="Mizoguchi H."/>
            <person name="Goto Y."/>
            <person name="Shimizu F."/>
            <person name="Wakebe H."/>
            <person name="Hishigaki H."/>
            <person name="Watanabe T."/>
            <person name="Sugiyama A."/>
            <person name="Takemoto M."/>
            <person name="Kawakami B."/>
            <person name="Yamazaki M."/>
            <person name="Watanabe K."/>
            <person name="Kumagai A."/>
            <person name="Itakura S."/>
            <person name="Fukuzumi Y."/>
            <person name="Fujimori Y."/>
            <person name="Komiyama M."/>
            <person name="Tashiro H."/>
            <person name="Tanigami A."/>
            <person name="Fujiwara T."/>
            <person name="Ono T."/>
            <person name="Yamada K."/>
            <person name="Fujii Y."/>
            <person name="Ozaki K."/>
            <person name="Hirao M."/>
            <person name="Ohmori Y."/>
            <person name="Kawabata A."/>
            <person name="Hikiji T."/>
            <person name="Kobatake N."/>
            <person name="Inagaki H."/>
            <person name="Ikema Y."/>
            <person name="Okamoto S."/>
            <person name="Okitani R."/>
            <person name="Kawakami T."/>
            <person name="Noguchi S."/>
            <person name="Itoh T."/>
            <person name="Shigeta K."/>
            <person name="Senba T."/>
            <person name="Matsumura K."/>
            <person name="Nakajima Y."/>
            <person name="Mizuno T."/>
            <person name="Morinaga M."/>
            <person name="Sasaki M."/>
            <person name="Togashi T."/>
            <person name="Oyama M."/>
            <person name="Hata H."/>
            <person name="Watanabe M."/>
            <person name="Komatsu T."/>
            <person name="Mizushima-Sugano J."/>
            <person name="Satoh T."/>
            <person name="Shirai Y."/>
            <person name="Takahashi Y."/>
            <person name="Nakagawa K."/>
            <person name="Okumura K."/>
            <person name="Nagase T."/>
            <person name="Nomura N."/>
            <person name="Kikuchi H."/>
            <person name="Masuho Y."/>
            <person name="Yamashita R."/>
            <person name="Nakai K."/>
            <person name="Yada T."/>
            <person name="Nakamura Y."/>
            <person name="Ohara O."/>
            <person name="Isogai T."/>
            <person name="Sugano S."/>
        </authorList>
    </citation>
    <scope>NUCLEOTIDE SEQUENCE [LARGE SCALE MRNA] (ISOFORM 1)</scope>
</reference>
<reference key="11">
    <citation type="submission" date="2003-10" db="EMBL/GenBank/DDBJ databases">
        <authorList>
            <consortium name="NIEHS SNPs program"/>
        </authorList>
    </citation>
    <scope>NUCLEOTIDE SEQUENCE [GENOMIC DNA]</scope>
    <scope>VARIANTS THR-16; ILE-122 AND ILE-305</scope>
</reference>
<reference key="12">
    <citation type="journal article" date="2004" name="Nature">
        <title>The DNA sequence and comparative analysis of human chromosome 10.</title>
        <authorList>
            <person name="Deloukas P."/>
            <person name="Earthrowl M.E."/>
            <person name="Grafham D.V."/>
            <person name="Rubenfield M."/>
            <person name="French L."/>
            <person name="Steward C.A."/>
            <person name="Sims S.K."/>
            <person name="Jones M.C."/>
            <person name="Searle S."/>
            <person name="Scott C."/>
            <person name="Howe K."/>
            <person name="Hunt S.E."/>
            <person name="Andrews T.D."/>
            <person name="Gilbert J.G.R."/>
            <person name="Swarbreck D."/>
            <person name="Ashurst J.L."/>
            <person name="Taylor A."/>
            <person name="Battles J."/>
            <person name="Bird C.P."/>
            <person name="Ainscough R."/>
            <person name="Almeida J.P."/>
            <person name="Ashwell R.I.S."/>
            <person name="Ambrose K.D."/>
            <person name="Babbage A.K."/>
            <person name="Bagguley C.L."/>
            <person name="Bailey J."/>
            <person name="Banerjee R."/>
            <person name="Bates K."/>
            <person name="Beasley H."/>
            <person name="Bray-Allen S."/>
            <person name="Brown A.J."/>
            <person name="Brown J.Y."/>
            <person name="Burford D.C."/>
            <person name="Burrill W."/>
            <person name="Burton J."/>
            <person name="Cahill P."/>
            <person name="Camire D."/>
            <person name="Carter N.P."/>
            <person name="Chapman J.C."/>
            <person name="Clark S.Y."/>
            <person name="Clarke G."/>
            <person name="Clee C.M."/>
            <person name="Clegg S."/>
            <person name="Corby N."/>
            <person name="Coulson A."/>
            <person name="Dhami P."/>
            <person name="Dutta I."/>
            <person name="Dunn M."/>
            <person name="Faulkner L."/>
            <person name="Frankish A."/>
            <person name="Frankland J.A."/>
            <person name="Garner P."/>
            <person name="Garnett J."/>
            <person name="Gribble S."/>
            <person name="Griffiths C."/>
            <person name="Grocock R."/>
            <person name="Gustafson E."/>
            <person name="Hammond S."/>
            <person name="Harley J.L."/>
            <person name="Hart E."/>
            <person name="Heath P.D."/>
            <person name="Ho T.P."/>
            <person name="Hopkins B."/>
            <person name="Horne J."/>
            <person name="Howden P.J."/>
            <person name="Huckle E."/>
            <person name="Hynds C."/>
            <person name="Johnson C."/>
            <person name="Johnson D."/>
            <person name="Kana A."/>
            <person name="Kay M."/>
            <person name="Kimberley A.M."/>
            <person name="Kershaw J.K."/>
            <person name="Kokkinaki M."/>
            <person name="Laird G.K."/>
            <person name="Lawlor S."/>
            <person name="Lee H.M."/>
            <person name="Leongamornlert D.A."/>
            <person name="Laird G."/>
            <person name="Lloyd C."/>
            <person name="Lloyd D.M."/>
            <person name="Loveland J."/>
            <person name="Lovell J."/>
            <person name="McLaren S."/>
            <person name="McLay K.E."/>
            <person name="McMurray A."/>
            <person name="Mashreghi-Mohammadi M."/>
            <person name="Matthews L."/>
            <person name="Milne S."/>
            <person name="Nickerson T."/>
            <person name="Nguyen M."/>
            <person name="Overton-Larty E."/>
            <person name="Palmer S.A."/>
            <person name="Pearce A.V."/>
            <person name="Peck A.I."/>
            <person name="Pelan S."/>
            <person name="Phillimore B."/>
            <person name="Porter K."/>
            <person name="Rice C.M."/>
            <person name="Rogosin A."/>
            <person name="Ross M.T."/>
            <person name="Sarafidou T."/>
            <person name="Sehra H.K."/>
            <person name="Shownkeen R."/>
            <person name="Skuce C.D."/>
            <person name="Smith M."/>
            <person name="Standring L."/>
            <person name="Sycamore N."/>
            <person name="Tester J."/>
            <person name="Thorpe A."/>
            <person name="Torcasso W."/>
            <person name="Tracey A."/>
            <person name="Tromans A."/>
            <person name="Tsolas J."/>
            <person name="Wall M."/>
            <person name="Walsh J."/>
            <person name="Wang H."/>
            <person name="Weinstock K."/>
            <person name="West A.P."/>
            <person name="Willey D.L."/>
            <person name="Whitehead S.L."/>
            <person name="Wilming L."/>
            <person name="Wray P.W."/>
            <person name="Young L."/>
            <person name="Chen Y."/>
            <person name="Lovering R.C."/>
            <person name="Moschonas N.K."/>
            <person name="Siebert R."/>
            <person name="Fechtel K."/>
            <person name="Bentley D."/>
            <person name="Durbin R.M."/>
            <person name="Hubbard T."/>
            <person name="Doucette-Stamm L."/>
            <person name="Beck S."/>
            <person name="Smith D.R."/>
            <person name="Rogers J."/>
        </authorList>
    </citation>
    <scope>NUCLEOTIDE SEQUENCE [LARGE SCALE GENOMIC DNA]</scope>
</reference>
<reference key="13">
    <citation type="submission" date="2005-09" db="EMBL/GenBank/DDBJ databases">
        <authorList>
            <person name="Mural R.J."/>
            <person name="Istrail S."/>
            <person name="Sutton G.G."/>
            <person name="Florea L."/>
            <person name="Halpern A.L."/>
            <person name="Mobarry C.M."/>
            <person name="Lippert R."/>
            <person name="Walenz B."/>
            <person name="Shatkay H."/>
            <person name="Dew I."/>
            <person name="Miller J.R."/>
            <person name="Flanigan M.J."/>
            <person name="Edwards N.J."/>
            <person name="Bolanos R."/>
            <person name="Fasulo D."/>
            <person name="Halldorsson B.V."/>
            <person name="Hannenhalli S."/>
            <person name="Turner R."/>
            <person name="Yooseph S."/>
            <person name="Lu F."/>
            <person name="Nusskern D.R."/>
            <person name="Shue B.C."/>
            <person name="Zheng X.H."/>
            <person name="Zhong F."/>
            <person name="Delcher A.L."/>
            <person name="Huson D.H."/>
            <person name="Kravitz S.A."/>
            <person name="Mouchard L."/>
            <person name="Reinert K."/>
            <person name="Remington K.A."/>
            <person name="Clark A.G."/>
            <person name="Waterman M.S."/>
            <person name="Eichler E.E."/>
            <person name="Adams M.D."/>
            <person name="Hunkapiller M.W."/>
            <person name="Myers E.W."/>
            <person name="Venter J.C."/>
        </authorList>
    </citation>
    <scope>NUCLEOTIDE SEQUENCE [LARGE SCALE GENOMIC DNA]</scope>
</reference>
<reference key="14">
    <citation type="journal article" date="2004" name="Genome Res.">
        <title>The status, quality, and expansion of the NIH full-length cDNA project: the Mammalian Gene Collection (MGC).</title>
        <authorList>
            <consortium name="The MGC Project Team"/>
        </authorList>
    </citation>
    <scope>NUCLEOTIDE SEQUENCE [LARGE SCALE MRNA] (ISOFORM 1)</scope>
    <source>
        <tissue>Urinary bladder</tissue>
    </source>
</reference>
<reference key="15">
    <citation type="journal article" date="1995" name="Cell">
        <title>RIP: a novel protein containing a death domain that interacts with Fas/APO-1 (CD95) in yeast and causes cell death.</title>
        <authorList>
            <person name="Stanger B.Z."/>
            <person name="Leder P."/>
            <person name="Lee T.-H."/>
            <person name="Kim E."/>
            <person name="Seed B."/>
        </authorList>
    </citation>
    <scope>INTERACTION WITH RIPK1</scope>
</reference>
<reference key="16">
    <citation type="journal article" date="1997" name="EMBO J.">
        <title>FLICE is activated by association with the CD95 death-inducing signaling complex (DISC).</title>
        <authorList>
            <person name="Medema J.P."/>
            <person name="Scaffidi C."/>
            <person name="Kischkel F.C."/>
            <person name="Shevchenko A."/>
            <person name="Mann M."/>
            <person name="Krammer P.H."/>
            <person name="Peter M.E."/>
        </authorList>
    </citation>
    <scope>FUNCTION</scope>
    <scope>IDENTIFICATION IN DISC COMPLEX</scope>
</reference>
<reference key="17">
    <citation type="journal article" date="1999" name="J. Biol. Chem.">
        <title>F1Aalpha, a death receptor-binding protein homologous to the Caenorhabditis elegans sex-determining protein, FEM-1, is a caspase substrate that mediates apoptosis.</title>
        <authorList>
            <person name="Chan S.-L."/>
            <person name="Tan K.-O."/>
            <person name="Zhang L."/>
            <person name="Yee K.S.Y."/>
            <person name="Ronca F."/>
            <person name="Chan M.-Y."/>
            <person name="Yu V.C."/>
        </authorList>
    </citation>
    <scope>INTERACTION WITH FEM1B</scope>
</reference>
<reference key="18">
    <citation type="journal article" date="1999" name="Proc. Natl. Acad. Sci. U.S.A.">
        <title>LFG: an anti-apoptotic gene that provides protection from fas-mediated cell death.</title>
        <authorList>
            <person name="Somia N.V."/>
            <person name="Schmitt M.J."/>
            <person name="Vetter D.E."/>
            <person name="Van Antwerp D."/>
            <person name="Heinemann S.F."/>
            <person name="Verma I.M."/>
        </authorList>
    </citation>
    <scope>INTERACTION WITH FAIM2</scope>
</reference>
<reference key="19">
    <citation type="journal article" date="2004" name="Genome Biol.">
        <title>An unappreciated role for RNA surveillance.</title>
        <authorList>
            <person name="Hillman R.T."/>
            <person name="Green R.E."/>
            <person name="Brenner S.E."/>
        </authorList>
    </citation>
    <scope>SPLICE ISOFORM(S) THAT ARE POTENTIAL NMD TARGET(S)</scope>
</reference>
<reference key="20">
    <citation type="journal article" date="2004" name="J. Biol. Chem.">
        <title>A death receptor-associated anti-apoptotic protein, BRE, inhibits mitochondrial apoptotic pathway.</title>
        <authorList>
            <person name="Li Q."/>
            <person name="Ching A.K.-K."/>
            <person name="Chan B.C.-L."/>
            <person name="Chow S.K.-Y."/>
            <person name="Lim P.-L."/>
            <person name="Ho T.C.-Y."/>
            <person name="Ip W.-K."/>
            <person name="Wong C.-K."/>
            <person name="Lam C.W.-K."/>
            <person name="Lee K.K.-H."/>
            <person name="Chan J.Y.-H."/>
            <person name="Chui Y.-L."/>
        </authorList>
    </citation>
    <scope>INTERACTION WITH BABAM2</scope>
</reference>
<reference key="21">
    <citation type="journal article" date="2008" name="Cell Death Differ.">
        <title>Identification of an antiapoptotic protein complex at death receptors.</title>
        <authorList>
            <person name="Sun M."/>
            <person name="Song L."/>
            <person name="Li Y."/>
            <person name="Zhou T."/>
            <person name="Jope R.S."/>
        </authorList>
    </citation>
    <scope>INTERACTION WITH DDX3X; GSK3B AND BIRC2</scope>
</reference>
<reference key="22">
    <citation type="journal article" date="2008" name="Mol. Cell">
        <title>Kinase-selective enrichment enables quantitative phosphoproteomics of the kinome across the cell cycle.</title>
        <authorList>
            <person name="Daub H."/>
            <person name="Olsen J.V."/>
            <person name="Bairlein M."/>
            <person name="Gnad F."/>
            <person name="Oppermann F.S."/>
            <person name="Korner R."/>
            <person name="Greff Z."/>
            <person name="Keri G."/>
            <person name="Stemmann O."/>
            <person name="Mann M."/>
        </authorList>
    </citation>
    <scope>IDENTIFICATION BY MASS SPECTROMETRY [LARGE SCALE ANALYSIS]</scope>
    <source>
        <tissue>Cervix carcinoma</tissue>
    </source>
</reference>
<reference key="23">
    <citation type="journal article" date="2008" name="Proc. Natl. Acad. Sci. U.S.A.">
        <title>A quantitative atlas of mitotic phosphorylation.</title>
        <authorList>
            <person name="Dephoure N."/>
            <person name="Zhou C."/>
            <person name="Villen J."/>
            <person name="Beausoleil S.A."/>
            <person name="Bakalarski C.E."/>
            <person name="Elledge S.J."/>
            <person name="Gygi S.P."/>
        </authorList>
    </citation>
    <scope>PHOSPHORYLATION [LARGE SCALE ANALYSIS] AT SER-209</scope>
    <scope>IDENTIFICATION BY MASS SPECTROMETRY [LARGE SCALE ANALYSIS]</scope>
    <source>
        <tissue>Cervix carcinoma</tissue>
    </source>
</reference>
<reference key="24">
    <citation type="journal article" date="2009" name="J. Proteome Res.">
        <title>Glycoproteomics analysis of human liver tissue by combination of multiple enzyme digestion and hydrazide chemistry.</title>
        <authorList>
            <person name="Chen R."/>
            <person name="Jiang X."/>
            <person name="Sun D."/>
            <person name="Han G."/>
            <person name="Wang F."/>
            <person name="Ye M."/>
            <person name="Wang L."/>
            <person name="Zou H."/>
        </authorList>
    </citation>
    <scope>GLYCOSYLATION [LARGE SCALE ANALYSIS] AT ASN-118</scope>
    <source>
        <tissue>Liver</tissue>
    </source>
</reference>
<reference key="25">
    <citation type="journal article" date="2010" name="Am. J. Hum. Genet.">
        <title>Whole-exome-sequencing-based discovery of human FADD deficiency.</title>
        <authorList>
            <person name="Bolze A."/>
            <person name="Byun M."/>
            <person name="McDonald D."/>
            <person name="Morgan N.V."/>
            <person name="Abhyankar A."/>
            <person name="Premkumar L."/>
            <person name="Puel A."/>
            <person name="Bacon C.M."/>
            <person name="Rieux-Laucat F."/>
            <person name="Pang K."/>
            <person name="Britland A."/>
            <person name="Abel L."/>
            <person name="Cant A."/>
            <person name="Maher E.R."/>
            <person name="Riedl S.J."/>
            <person name="Hambleton S."/>
            <person name="Casanova J.L."/>
        </authorList>
    </citation>
    <scope>INTERACTION WITH FADD</scope>
</reference>
<reference key="26">
    <citation type="journal article" date="2010" name="Sci. Signal.">
        <title>Quantitative phosphoproteomics reveals widespread full phosphorylation site occupancy during mitosis.</title>
        <authorList>
            <person name="Olsen J.V."/>
            <person name="Vermeulen M."/>
            <person name="Santamaria A."/>
            <person name="Kumar C."/>
            <person name="Miller M.L."/>
            <person name="Jensen L.J."/>
            <person name="Gnad F."/>
            <person name="Cox J."/>
            <person name="Jensen T.S."/>
            <person name="Nigg E.A."/>
            <person name="Brunak S."/>
            <person name="Mann M."/>
        </authorList>
    </citation>
    <scope>IDENTIFICATION BY MASS SPECTROMETRY [LARGE SCALE ANALYSIS]</scope>
    <source>
        <tissue>Cervix carcinoma</tissue>
    </source>
</reference>
<reference key="27">
    <citation type="journal article" date="2011" name="BMC Syst. Biol.">
        <title>Initial characterization of the human central proteome.</title>
        <authorList>
            <person name="Burkard T.R."/>
            <person name="Planyavsky M."/>
            <person name="Kaupe I."/>
            <person name="Breitwieser F.P."/>
            <person name="Buerckstuemmer T."/>
            <person name="Bennett K.L."/>
            <person name="Superti-Furga G."/>
            <person name="Colinge J."/>
        </authorList>
    </citation>
    <scope>IDENTIFICATION BY MASS SPECTROMETRY [LARGE SCALE ANALYSIS]</scope>
</reference>
<reference key="28">
    <citation type="journal article" date="2012" name="Mol. Cell. Proteomics">
        <title>Human urinary glycoproteomics; attachment site specific analysis of N- and O-linked glycosylations by CID and ECD.</title>
        <authorList>
            <person name="Halim A."/>
            <person name="Nilsson J."/>
            <person name="Ruetschi U."/>
            <person name="Hesse C."/>
            <person name="Larson G."/>
        </authorList>
    </citation>
    <scope>GLYCOSYLATION AT THR-28</scope>
    <scope>STRUCTURE OF CARBOHYDRATES</scope>
    <scope>IDENTIFICATION BY MASS SPECTROMETRY</scope>
</reference>
<reference key="29">
    <citation type="journal article" date="2013" name="Nature">
        <title>Pathogen blocks host death receptor signalling by arginine GlcNAcylation of death domains.</title>
        <authorList>
            <person name="Li S."/>
            <person name="Zhang L."/>
            <person name="Yao Q."/>
            <person name="Li L."/>
            <person name="Dong N."/>
            <person name="Rong J."/>
            <person name="Gao W."/>
            <person name="Ding X."/>
            <person name="Sun L."/>
            <person name="Chen X."/>
            <person name="Chen S."/>
            <person name="Shao F."/>
        </authorList>
    </citation>
    <scope>GLYCOSYLATION AT ARG-250 (MICROBIAL INFECTION)</scope>
</reference>
<reference key="30">
    <citation type="journal article" date="2014" name="J. Proteomics">
        <title>An enzyme assisted RP-RPLC approach for in-depth analysis of human liver phosphoproteome.</title>
        <authorList>
            <person name="Bian Y."/>
            <person name="Song C."/>
            <person name="Cheng K."/>
            <person name="Dong M."/>
            <person name="Wang F."/>
            <person name="Huang J."/>
            <person name="Sun D."/>
            <person name="Wang L."/>
            <person name="Ye M."/>
            <person name="Zou H."/>
        </authorList>
    </citation>
    <scope>PHOSPHORYLATION [LARGE SCALE ANALYSIS] AT SER-225</scope>
    <scope>IDENTIFICATION BY MASS SPECTROMETRY [LARGE SCALE ANALYSIS]</scope>
    <source>
        <tissue>Liver</tissue>
    </source>
</reference>
<reference key="31">
    <citation type="journal article" date="2015" name="Cell Death Differ.">
        <title>Fas palmitoylation by the palmitoyl acyltransferase DHHC7 regulates Fas stability.</title>
        <authorList>
            <person name="Rossin A."/>
            <person name="Durivault J."/>
            <person name="Chakhtoura-Feghali T."/>
            <person name="Lounnas N."/>
            <person name="Gagnoux-Palacios L."/>
            <person name="Hueber A.O."/>
        </authorList>
    </citation>
    <scope>SUBCELLULAR LOCATION</scope>
    <scope>PALMITOYLATION AT CYS-199</scope>
    <scope>MUTAGENESIS OF CYS-199</scope>
</reference>
<reference key="32">
    <citation type="journal article" date="2019" name="Mol. Cell">
        <title>Structural and functional insights into host death domains inactivation by the bacterial arginine GlcNAcyltransferase effector.</title>
        <authorList>
            <person name="Ding J."/>
            <person name="Pan X."/>
            <person name="Du L."/>
            <person name="Yao Q."/>
            <person name="Xue J."/>
            <person name="Yao H."/>
            <person name="Wang D.C."/>
            <person name="Li S."/>
            <person name="Shao F."/>
        </authorList>
    </citation>
    <scope>GLYCOSYLATION AT ARG-250 (MICROBIAL INFECTION)</scope>
    <scope>MUTAGENESIS OF ARG-250</scope>
</reference>
<reference key="33">
    <citation type="journal article" date="1996" name="Nature">
        <title>NMR structure and mutagenesis of the Fas (APO-1/CD95) death domain.</title>
        <authorList>
            <person name="Huang B."/>
            <person name="Eberstadt M."/>
            <person name="Olejniczak E.T."/>
            <person name="Meadows R.P."/>
            <person name="Fesik S.W."/>
        </authorList>
    </citation>
    <scope>STRUCTURE BY NMR OF 218-335</scope>
</reference>
<reference key="34">
    <citation type="journal article" date="2009" name="Nature">
        <title>The Fas-FADD death domain complex structure unravels signalling by receptor clustering.</title>
        <authorList>
            <person name="Scott F.L."/>
            <person name="Stec B."/>
            <person name="Pop C."/>
            <person name="Dobaczewska M.K."/>
            <person name="Lee J.J."/>
            <person name="Monosov E."/>
            <person name="Robinson H."/>
            <person name="Salvesen G.S."/>
            <person name="Schwarzenbacher R."/>
            <person name="Riedl S.J."/>
        </authorList>
    </citation>
    <scope>X-RAY CRYSTALLOGRAPHY (2.73 ANGSTROMS) OF 223-335 IN COMPLEX WITH FADD</scope>
    <scope>FUNCTION</scope>
    <scope>SUBUNIT</scope>
    <scope>SUBCELLULAR LOCATION</scope>
    <scope>MUTAGENESIS OF TYR-291 AND ILE-313</scope>
</reference>
<reference key="35">
    <citation type="journal article" date="2014" name="Acta Crystallogr. D">
        <title>Structural insights into the mechanism of calmodulin binding to death receptors.</title>
        <authorList>
            <person name="Jiang T."/>
            <person name="Cao P."/>
            <person name="Gong Y."/>
            <person name="Yu H.J."/>
            <person name="Gui W.J."/>
            <person name="Zhang W.T."/>
        </authorList>
    </citation>
    <scope>X-RAY CRYSTALLOGRAPHY (2.40 ANGSTROMS) OF 230-254 IN COMPLEX WITH CALM</scope>
    <scope>CALMODULIN-BINDING</scope>
</reference>
<reference key="36">
    <citation type="journal article" date="1995" name="Cell">
        <title>Dominant interfering Fas gene mutations impair apoptosis in a human autoimmune lymphoproliferative syndrome.</title>
        <authorList>
            <person name="Fisher G.H."/>
            <person name="Rosenberg F.J."/>
            <person name="Straus S.E."/>
            <person name="Dale J.K."/>
            <person name="Middleton L.A."/>
            <person name="Lin A.Y."/>
            <person name="Strober W."/>
            <person name="Lenardo M.J."/>
            <person name="Puck J.M."/>
        </authorList>
    </citation>
    <scope>VARIANT ALPS1A PRO-241</scope>
</reference>
<reference key="37">
    <citation type="journal article" date="1996" name="N. Engl. J. Med.">
        <title>Fas gene mutations in the Canale-Smith syndrome, an inherited lymphoproliferative disorder associated with autoimmunity.</title>
        <authorList>
            <person name="Drappa J."/>
            <person name="Vaishnaw A.K."/>
            <person name="Sullivan K.E."/>
            <person name="Chu J.-L."/>
            <person name="Elkon K.B."/>
        </authorList>
    </citation>
    <scope>VARIANT ALPS1A TYR-260</scope>
</reference>
<reference key="38">
    <citation type="journal article" date="1997" name="Blood">
        <title>Missense mutations in the Fas gene resulting in autoimmune lymphoproliferative syndrome: a molecular and immunological analysis.</title>
        <authorList>
            <person name="Bettinardi A."/>
            <person name="Brugnoni D."/>
            <person name="Quiros-Roldan E."/>
            <person name="Malagoli A."/>
            <person name="La Grutta S."/>
            <person name="Correra A."/>
            <person name="Notarangelo L.D."/>
        </authorList>
    </citation>
    <scope>VARIANTS ALPS1A TRP-121 AND CYS-232</scope>
</reference>
<reference key="39">
    <citation type="journal article" date="1997" name="Blood">
        <title>Clinical, immunologic, and genetic features of an autoimmune lymphoproliferative syndrome associated with abnormal lymphocyte apoptosis.</title>
        <authorList>
            <person name="Sneller M.C."/>
            <person name="Wang J."/>
            <person name="Dale J.K."/>
            <person name="Strober W."/>
            <person name="Middelton L.A."/>
            <person name="Choi Y."/>
            <person name="Fleisher T.A."/>
            <person name="Lim M.S."/>
            <person name="Jaffe E.S."/>
            <person name="Puck J.M."/>
            <person name="Lenardo M.J."/>
            <person name="Straus S.E."/>
        </authorList>
    </citation>
    <scope>VARIANTS ALPS1A ASP-257 AND SER-310</scope>
</reference>
<reference key="40">
    <citation type="journal article" date="1997" name="Gastroenterology">
        <title>Fas/Apo1 mutations and autoimmune lymphoproliferative syndrome in a patient with type 2 autoimmune hepatitis.</title>
        <authorList>
            <person name="Pensati L."/>
            <person name="Costanzo A."/>
            <person name="Ianni A."/>
            <person name="Accapezzato D."/>
            <person name="Iorio R."/>
            <person name="Natoli G."/>
            <person name="Nisini R."/>
            <person name="Almerighi C."/>
            <person name="Balsano C."/>
            <person name="Vajro P."/>
            <person name="Vegnente A."/>
            <person name="Levrero M."/>
        </authorList>
    </citation>
    <scope>VARIANT ALPS1A ALA-28</scope>
</reference>
<reference key="41">
    <citation type="journal article" date="1998" name="Blood">
        <title>Somatic Fas mutations in non-Hodgkin's lymphoma: association with extranodal disease and autoimmunity.</title>
        <authorList>
            <person name="Groenbaek K."/>
            <person name="Straten P.T."/>
            <person name="Ralfkiaer E."/>
            <person name="Ahrenkiel V."/>
            <person name="Andersen M.K."/>
            <person name="Hansen N.E."/>
            <person name="Zeuthen J."/>
            <person name="Hou-Jensen K."/>
            <person name="Guldberg P."/>
        </authorList>
    </citation>
    <scope>VARIANTS NON-HODGKIN LYMPHOMA THR-25; PHE-180; LEU-183; ILE-198; VAL-260; LYS-264; LYS-272; PHE-278 AND ASN-299</scope>
</reference>
<reference key="42">
    <citation type="journal article" date="1998" name="J. Pediatr.">
        <title>The clinical spectrum in a large kindred with autoimmune lymphoproliferative syndrome caused by a Fas mutation that impairs lymphocyte apoptosis.</title>
        <authorList>
            <person name="Infante A.J."/>
            <person name="Britton H.A."/>
            <person name="DeNapoli T."/>
            <person name="Middelton L.A."/>
            <person name="Lenardo M.J."/>
            <person name="Jackson C.E."/>
            <person name="Wang J."/>
            <person name="Fleisher T."/>
            <person name="Straus S.E."/>
            <person name="Puck J.M."/>
        </authorList>
    </citation>
    <scope>VARIANT ALPS1A VAL-260</scope>
</reference>
<reference key="43">
    <citation type="journal article" date="1999" name="Am. J. Hum. Genet.">
        <title>Autoimmune lymphoproliferative syndrome with defective Fas: genotype influences penetrance.</title>
        <authorList>
            <person name="Jackson C.E."/>
            <person name="Fischer R.E."/>
            <person name="Hsu A.P."/>
            <person name="Anderson S.M."/>
            <person name="Choi Y."/>
            <person name="Wang J."/>
            <person name="Dale J.K."/>
            <person name="Fleisher T.A."/>
            <person name="Middelton L.A."/>
            <person name="Sneller M.C."/>
            <person name="Lenardo M.J."/>
            <person name="Straus S.E."/>
            <person name="Puck J.M."/>
        </authorList>
    </citation>
    <scope>VARIANTS ALPS1A LYS-241 AND GLN-250</scope>
</reference>
<reference key="44">
    <citation type="journal article" date="1999" name="Blood">
        <title>Lymphoproliferative syndrome with autoimmunity: A possible genetic basis for dominant expression of the clinical manifestations.</title>
        <authorList>
            <person name="Rieux-Laucat F."/>
            <person name="Blachere S."/>
            <person name="Danielan S."/>
            <person name="De Villartay J.P."/>
            <person name="Oleastro M."/>
            <person name="Solary E."/>
            <person name="Bader-Meunier B."/>
            <person name="Arkwright P."/>
            <person name="Pondare C."/>
            <person name="Bernaudin F."/>
            <person name="Chapel H."/>
            <person name="Nielsen S."/>
            <person name="Berrah M."/>
            <person name="Fischer A."/>
            <person name="Le Deist F."/>
        </authorList>
    </citation>
    <scope>VARIANTS ALPS1A LEU-249; PRO-250; ASP-253; SER-253; ARG-259; LYS-270 AND LYS-272</scope>
</reference>
<reference key="45">
    <citation type="journal article" date="1999" name="Exp. Hematol.">
        <title>Defective apoptosis due to a point mutation in the death domain of CD95 associated with autoimmune lymphoproliferative syndrome, T-cell lymphoma, and Hodgkin's disease.</title>
        <authorList>
            <person name="Peters A.M."/>
            <person name="Kohfink B."/>
            <person name="Martin H."/>
            <person name="Griesinger F."/>
            <person name="Wormann B."/>
            <person name="Gahr M."/>
            <person name="Roesler J."/>
        </authorList>
    </citation>
    <scope>VARIANT ALPS1A GLY-272</scope>
</reference>
<reference key="46">
    <citation type="journal article" date="1999" name="J. Clin. Invest.">
        <title>The molecular basis for apoptotic defects in patients with CD95 (Fas/Apo-1) mutations.</title>
        <authorList>
            <person name="Vaishnaw A.K."/>
            <person name="Orlinick J.R."/>
            <person name="Chu J.-L."/>
            <person name="Krammer P.H."/>
            <person name="Chao M.V."/>
            <person name="Elkon K.B."/>
        </authorList>
    </citation>
    <scope>VARIANTS ALPS1A ARG-82; PRO-250; GLY-260 AND ILE-270</scope>
</reference>
<reference key="47">
    <citation type="journal article" date="2000" name="J. Invest. Dermatol.">
        <title>Somatic mutations of Fas (Apo-1/CD95) gene in cutaneous squamous cell carcinoma arising from a burn scar.</title>
        <authorList>
            <person name="Lee S.H."/>
            <person name="Shin M.S."/>
            <person name="Kim H.S."/>
            <person name="Park W.S."/>
            <person name="Kim S.Y."/>
            <person name="Jang J.J."/>
            <person name="Rhim K.J."/>
            <person name="Jang J."/>
            <person name="Lee H.K."/>
            <person name="Park J.Y."/>
            <person name="Oh R.R."/>
            <person name="Han S.Y."/>
            <person name="Lee J.H."/>
            <person name="Lee J.Y."/>
            <person name="Yoo N.J."/>
        </authorList>
    </citation>
    <scope>VARIANTS SQUAMOUS CELL CARCINOMA SER-118; ARG-178 AND ASP-255</scope>
</reference>
<reference key="48">
    <citation type="journal article" date="2001" name="Blood">
        <title>The development of lymphomas in families with autoimmune lymphoproliferative syndrome with germline Fas mutations and defective lymphocyte apoptosis.</title>
        <authorList>
            <person name="Straus S.E."/>
            <person name="Jaffe E.S."/>
            <person name="Puck J.M."/>
            <person name="Dale J.K."/>
            <person name="Elkon K.B."/>
            <person name="Roesen-Wolff A."/>
            <person name="Peters A.M.J."/>
            <person name="Sneller M.C."/>
            <person name="Hallahan C.W."/>
            <person name="Wang J."/>
            <person name="Fischer R.E."/>
            <person name="Jackson C.M."/>
            <person name="Lin A.Y."/>
            <person name="Baeumler C."/>
            <person name="Siegert E."/>
            <person name="Marx A."/>
            <person name="Vaishnaw A.K."/>
            <person name="Grodzicky T."/>
            <person name="Fleisher T.A."/>
            <person name="Lenardo M.J."/>
        </authorList>
    </citation>
    <scope>VARIANTS ALPS1A PRO-241; VAL-260; ILE-270 AND GLY-272</scope>
</reference>
<reference key="49">
    <citation type="journal article" date="2010" name="Nat. Struct. Mol. Biol.">
        <title>The Fas-FADD death domain complex structure reveals the basis of DISC assembly and disease mutations.</title>
        <authorList>
            <person name="Wang L."/>
            <person name="Yang J.K."/>
            <person name="Kabaleeswaran V."/>
            <person name="Rice A.J."/>
            <person name="Cruz A.C."/>
            <person name="Park A.Y."/>
            <person name="Yin Q."/>
            <person name="Damko E."/>
            <person name="Jang S.B."/>
            <person name="Raunser S."/>
            <person name="Robinson C.V."/>
            <person name="Siegel R.M."/>
            <person name="Walz T."/>
            <person name="Wu H."/>
        </authorList>
    </citation>
    <scope>CHARACTERIZATION OF VARIANTS ALPS1A CYS-232; GLN-250; ASP-257; TYR-260; VAL-260; LYS-270 AND LYS-272</scope>
    <scope>MUTAGENESIS OF ARG-250; GLU-261; GLN-283 AND LYS-287</scope>
</reference>
<dbReference type="EMBL" id="M67454">
    <property type="protein sequence ID" value="AAA63174.1"/>
    <property type="molecule type" value="mRNA"/>
</dbReference>
<dbReference type="EMBL" id="X63717">
    <property type="protein sequence ID" value="CAA45250.1"/>
    <property type="molecule type" value="mRNA"/>
</dbReference>
<dbReference type="EMBL" id="X83490">
    <property type="status" value="NOT_ANNOTATED_CDS"/>
    <property type="molecule type" value="mRNA"/>
</dbReference>
<dbReference type="EMBL" id="X83491">
    <property type="status" value="NOT_ANNOTATED_CDS"/>
    <property type="molecule type" value="mRNA"/>
</dbReference>
<dbReference type="EMBL" id="X83492">
    <property type="status" value="NOT_ANNOTATED_CDS"/>
    <property type="molecule type" value="mRNA"/>
</dbReference>
<dbReference type="EMBL" id="X83493">
    <property type="status" value="NOT_ANNOTATED_CDS"/>
    <property type="molecule type" value="mRNA"/>
</dbReference>
<dbReference type="EMBL" id="Z47993">
    <property type="protein sequence ID" value="CAA88031.1"/>
    <property type="molecule type" value="mRNA"/>
</dbReference>
<dbReference type="EMBL" id="Z47994">
    <property type="protein sequence ID" value="CAA88032.1"/>
    <property type="molecule type" value="mRNA"/>
</dbReference>
<dbReference type="EMBL" id="Z47995">
    <property type="protein sequence ID" value="CAA88033.1"/>
    <property type="molecule type" value="mRNA"/>
</dbReference>
<dbReference type="EMBL" id="Z66556">
    <property type="status" value="NOT_ANNOTATED_CDS"/>
    <property type="molecule type" value="mRNA"/>
</dbReference>
<dbReference type="EMBL" id="Z70519">
    <property type="protein sequence ID" value="CAA94430.1"/>
    <property type="molecule type" value="mRNA"/>
</dbReference>
<dbReference type="EMBL" id="Z70520">
    <property type="protein sequence ID" value="CAA94431.1"/>
    <property type="molecule type" value="mRNA"/>
</dbReference>
<dbReference type="EMBL" id="AY495076">
    <property type="protein sequence ID" value="AAS76663.1"/>
    <property type="molecule type" value="mRNA"/>
</dbReference>
<dbReference type="EMBL" id="X89101">
    <property type="protein sequence ID" value="CAA61473.1"/>
    <property type="molecule type" value="mRNA"/>
</dbReference>
<dbReference type="EMBL" id="FM246458">
    <property type="protein sequence ID" value="CAR92543.1"/>
    <property type="molecule type" value="mRNA"/>
</dbReference>
<dbReference type="EMBL" id="AK290978">
    <property type="protein sequence ID" value="BAF83667.1"/>
    <property type="molecule type" value="mRNA"/>
</dbReference>
<dbReference type="EMBL" id="AY450925">
    <property type="protein sequence ID" value="AAR08906.1"/>
    <property type="molecule type" value="Genomic_DNA"/>
</dbReference>
<dbReference type="EMBL" id="AL157394">
    <property type="status" value="NOT_ANNOTATED_CDS"/>
    <property type="molecule type" value="Genomic_DNA"/>
</dbReference>
<dbReference type="EMBL" id="CH471066">
    <property type="protein sequence ID" value="EAW50151.1"/>
    <property type="molecule type" value="Genomic_DNA"/>
</dbReference>
<dbReference type="EMBL" id="BC012479">
    <property type="protein sequence ID" value="AAH12479.1"/>
    <property type="molecule type" value="mRNA"/>
</dbReference>
<dbReference type="CCDS" id="CCDS7393.1">
    <molecule id="P25445-1"/>
</dbReference>
<dbReference type="CCDS" id="CCDS7394.1">
    <molecule id="P25445-6"/>
</dbReference>
<dbReference type="CCDS" id="CCDS7395.1">
    <molecule id="P25445-7"/>
</dbReference>
<dbReference type="PIR" id="A40036">
    <property type="entry name" value="A40036"/>
</dbReference>
<dbReference type="PIR" id="I37383">
    <property type="entry name" value="I37383"/>
</dbReference>
<dbReference type="PIR" id="I37384">
    <property type="entry name" value="I37384"/>
</dbReference>
<dbReference type="PIR" id="S58662">
    <property type="entry name" value="S58662"/>
</dbReference>
<dbReference type="RefSeq" id="NP_000034.1">
    <molecule id="P25445-1"/>
    <property type="nucleotide sequence ID" value="NM_000043.6"/>
</dbReference>
<dbReference type="RefSeq" id="NP_001307548.1">
    <property type="nucleotide sequence ID" value="NM_001320619.1"/>
</dbReference>
<dbReference type="RefSeq" id="NP_690610.1">
    <molecule id="P25445-6"/>
    <property type="nucleotide sequence ID" value="NM_152871.4"/>
</dbReference>
<dbReference type="RefSeq" id="NP_690611.1">
    <molecule id="P25445-7"/>
    <property type="nucleotide sequence ID" value="NM_152872.4"/>
</dbReference>
<dbReference type="PDB" id="1DDF">
    <property type="method" value="NMR"/>
    <property type="chains" value="A=218-335"/>
</dbReference>
<dbReference type="PDB" id="2NA7">
    <property type="method" value="NMR"/>
    <property type="chains" value="A/B/C=171-198"/>
</dbReference>
<dbReference type="PDB" id="3EWT">
    <property type="method" value="X-ray"/>
    <property type="resolution" value="2.40 A"/>
    <property type="chains" value="E=230-254"/>
</dbReference>
<dbReference type="PDB" id="3EZQ">
    <property type="method" value="X-ray"/>
    <property type="resolution" value="2.73 A"/>
    <property type="chains" value="A/C/E/G/I/K/M/O=223-335"/>
</dbReference>
<dbReference type="PDB" id="3THM">
    <property type="method" value="X-ray"/>
    <property type="resolution" value="2.10 A"/>
    <property type="chains" value="F=17-172"/>
</dbReference>
<dbReference type="PDB" id="3TJE">
    <property type="method" value="X-ray"/>
    <property type="resolution" value="1.93 A"/>
    <property type="chains" value="F=17-172"/>
</dbReference>
<dbReference type="PDBsum" id="1DDF"/>
<dbReference type="PDBsum" id="2NA7"/>
<dbReference type="PDBsum" id="3EWT"/>
<dbReference type="PDBsum" id="3EZQ"/>
<dbReference type="PDBsum" id="3THM"/>
<dbReference type="PDBsum" id="3TJE"/>
<dbReference type="SMR" id="P25445"/>
<dbReference type="BioGRID" id="106851">
    <property type="interactions" value="360"/>
</dbReference>
<dbReference type="CORUM" id="P25445"/>
<dbReference type="DIP" id="DIP-924N"/>
<dbReference type="FunCoup" id="P25445">
    <property type="interactions" value="1444"/>
</dbReference>
<dbReference type="IntAct" id="P25445">
    <property type="interactions" value="113"/>
</dbReference>
<dbReference type="MINT" id="P25445"/>
<dbReference type="STRING" id="9606.ENSP00000498466"/>
<dbReference type="ChEMBL" id="CHEMBL4523207"/>
<dbReference type="GlyConnect" id="773">
    <property type="glycosylation" value="1 O-Linked glycan (1 site)"/>
</dbReference>
<dbReference type="GlyCosmos" id="P25445">
    <property type="glycosylation" value="7 sites, 4 glycans"/>
</dbReference>
<dbReference type="GlyGen" id="P25445">
    <property type="glycosylation" value="10 sites, 27 N-linked glycans (2 sites), 5 O-linked glycans (7 sites)"/>
</dbReference>
<dbReference type="iPTMnet" id="P25445"/>
<dbReference type="PhosphoSitePlus" id="P25445"/>
<dbReference type="SwissPalm" id="P25445"/>
<dbReference type="BioMuta" id="FAS"/>
<dbReference type="DMDM" id="119833"/>
<dbReference type="CPTAC" id="CPTAC-5953"/>
<dbReference type="CPTAC" id="CPTAC-5954"/>
<dbReference type="jPOST" id="P25445"/>
<dbReference type="MassIVE" id="P25445"/>
<dbReference type="PaxDb" id="9606-ENSP00000347979"/>
<dbReference type="PeptideAtlas" id="P25445"/>
<dbReference type="ProteomicsDB" id="54273">
    <molecule id="P25445-1"/>
</dbReference>
<dbReference type="ProteomicsDB" id="54276">
    <molecule id="P25445-4"/>
</dbReference>
<dbReference type="ProteomicsDB" id="54277">
    <molecule id="P25445-5"/>
</dbReference>
<dbReference type="ProteomicsDB" id="54278">
    <molecule id="P25445-6"/>
</dbReference>
<dbReference type="ProteomicsDB" id="64806"/>
<dbReference type="Pumba" id="P25445"/>
<dbReference type="TopDownProteomics" id="P25445-7">
    <molecule id="P25445-7"/>
</dbReference>
<dbReference type="ABCD" id="P25445">
    <property type="antibodies" value="12 sequenced antibodies"/>
</dbReference>
<dbReference type="Antibodypedia" id="4525">
    <property type="antibodies" value="3057 antibodies from 54 providers"/>
</dbReference>
<dbReference type="CPTC" id="P25445">
    <property type="antibodies" value="2 antibodies"/>
</dbReference>
<dbReference type="DNASU" id="355"/>
<dbReference type="Ensembl" id="ENST00000355279.2">
    <molecule id="P25445-7"/>
    <property type="protein sequence ID" value="ENSP00000347426.2"/>
    <property type="gene ID" value="ENSG00000026103.25"/>
</dbReference>
<dbReference type="Ensembl" id="ENST00000357339.7">
    <molecule id="P25445-6"/>
    <property type="protein sequence ID" value="ENSP00000349896.2"/>
    <property type="gene ID" value="ENSG00000026103.25"/>
</dbReference>
<dbReference type="Ensembl" id="ENST00000479522.6">
    <molecule id="P25445-3"/>
    <property type="protein sequence ID" value="ENSP00000424113.1"/>
    <property type="gene ID" value="ENSG00000026103.25"/>
</dbReference>
<dbReference type="Ensembl" id="ENST00000484444.6">
    <molecule id="P25445-2"/>
    <property type="protein sequence ID" value="ENSP00000420975.1"/>
    <property type="gene ID" value="ENSG00000026103.25"/>
</dbReference>
<dbReference type="Ensembl" id="ENST00000488877.6">
    <molecule id="P25445-4"/>
    <property type="protein sequence ID" value="ENSP00000425159.1"/>
    <property type="gene ID" value="ENSG00000026103.25"/>
</dbReference>
<dbReference type="Ensembl" id="ENST00000492756.7">
    <molecule id="P25445-5"/>
    <property type="protein sequence ID" value="ENSP00000422453.1"/>
    <property type="gene ID" value="ENSG00000026103.25"/>
</dbReference>
<dbReference type="Ensembl" id="ENST00000494410.5">
    <molecule id="P25445-4"/>
    <property type="protein sequence ID" value="ENSP00000423755.1"/>
    <property type="gene ID" value="ENSG00000026103.25"/>
</dbReference>
<dbReference type="Ensembl" id="ENST00000652046.1">
    <molecule id="P25445-1"/>
    <property type="protein sequence ID" value="ENSP00000498466.1"/>
    <property type="gene ID" value="ENSG00000026103.25"/>
</dbReference>
<dbReference type="Ensembl" id="ENST00000697036.1">
    <molecule id="P25445-4"/>
    <property type="protein sequence ID" value="ENSP00000513060.1"/>
    <property type="gene ID" value="ENSG00000026103.25"/>
</dbReference>
<dbReference type="GeneID" id="355"/>
<dbReference type="KEGG" id="hsa:355"/>
<dbReference type="MANE-Select" id="ENST00000652046.1">
    <property type="protein sequence ID" value="ENSP00000498466.1"/>
    <property type="RefSeq nucleotide sequence ID" value="NM_000043.6"/>
    <property type="RefSeq protein sequence ID" value="NP_000034.1"/>
</dbReference>
<dbReference type="UCSC" id="uc001kfr.4">
    <molecule id="P25445-1"/>
    <property type="organism name" value="human"/>
</dbReference>
<dbReference type="AGR" id="HGNC:11920"/>
<dbReference type="CTD" id="355"/>
<dbReference type="DisGeNET" id="355"/>
<dbReference type="GeneCards" id="FAS"/>
<dbReference type="GeneReviews" id="FAS"/>
<dbReference type="HGNC" id="HGNC:11920">
    <property type="gene designation" value="FAS"/>
</dbReference>
<dbReference type="HPA" id="ENSG00000026103">
    <property type="expression patterns" value="Low tissue specificity"/>
</dbReference>
<dbReference type="MalaCards" id="FAS"/>
<dbReference type="MIM" id="134637">
    <property type="type" value="gene"/>
</dbReference>
<dbReference type="MIM" id="601859">
    <property type="type" value="phenotype"/>
</dbReference>
<dbReference type="neXtProt" id="NX_P25445"/>
<dbReference type="OpenTargets" id="ENSG00000026103"/>
<dbReference type="Orphanet" id="3261">
    <property type="disease" value="Autoimmune lymphoproliferative syndrome"/>
</dbReference>
<dbReference type="Orphanet" id="117">
    <property type="disease" value="Behcet disease"/>
</dbReference>
<dbReference type="Orphanet" id="3437">
    <property type="disease" value="Vogt-Koyanagi-Harada disease"/>
</dbReference>
<dbReference type="PharmGKB" id="PA36613"/>
<dbReference type="VEuPathDB" id="HostDB:ENSG00000026103"/>
<dbReference type="eggNOG" id="ENOG502S0SV">
    <property type="taxonomic scope" value="Eukaryota"/>
</dbReference>
<dbReference type="GeneTree" id="ENSGT00950000183126"/>
<dbReference type="HOGENOM" id="CLU_067123_1_0_1"/>
<dbReference type="InParanoid" id="P25445"/>
<dbReference type="OMA" id="RDTKCRC"/>
<dbReference type="OrthoDB" id="8848202at2759"/>
<dbReference type="PAN-GO" id="P25445">
    <property type="GO annotations" value="11 GO annotations based on evolutionary models"/>
</dbReference>
<dbReference type="PhylomeDB" id="P25445"/>
<dbReference type="TreeFam" id="TF333916"/>
<dbReference type="PathwayCommons" id="P25445"/>
<dbReference type="Reactome" id="R-HSA-140534">
    <property type="pathway name" value="Caspase activation via Death Receptors in the presence of ligand"/>
</dbReference>
<dbReference type="Reactome" id="R-HSA-3371378">
    <property type="pathway name" value="Regulation by c-FLIP"/>
</dbReference>
<dbReference type="Reactome" id="R-HSA-5213460">
    <property type="pathway name" value="RIPK1-mediated regulated necrosis"/>
</dbReference>
<dbReference type="Reactome" id="R-HSA-5218900">
    <property type="pathway name" value="CASP8 activity is inhibited"/>
</dbReference>
<dbReference type="Reactome" id="R-HSA-6803211">
    <property type="pathway name" value="TP53 Regulates Transcription of Death Receptors and Ligands"/>
</dbReference>
<dbReference type="Reactome" id="R-HSA-69416">
    <property type="pathway name" value="Dimerization of procaspase-8"/>
</dbReference>
<dbReference type="Reactome" id="R-HSA-75157">
    <property type="pathway name" value="FasL/ CD95L signaling"/>
</dbReference>
<dbReference type="SignaLink" id="P25445"/>
<dbReference type="SIGNOR" id="P25445"/>
<dbReference type="BioGRID-ORCS" id="355">
    <property type="hits" value="9 hits in 1151 CRISPR screens"/>
</dbReference>
<dbReference type="ChiTaRS" id="FAS">
    <property type="organism name" value="human"/>
</dbReference>
<dbReference type="EvolutionaryTrace" id="P25445"/>
<dbReference type="GeneWiki" id="Fas_receptor"/>
<dbReference type="GenomeRNAi" id="355"/>
<dbReference type="Pharos" id="P25445">
    <property type="development level" value="Tbio"/>
</dbReference>
<dbReference type="PRO" id="PR:P25445"/>
<dbReference type="Proteomes" id="UP000005640">
    <property type="component" value="Chromosome 10"/>
</dbReference>
<dbReference type="RNAct" id="P25445">
    <property type="molecule type" value="protein"/>
</dbReference>
<dbReference type="Bgee" id="ENSG00000026103">
    <property type="expression patterns" value="Expressed in rectum and 191 other cell types or tissues"/>
</dbReference>
<dbReference type="ExpressionAtlas" id="P25445">
    <property type="expression patterns" value="baseline and differential"/>
</dbReference>
<dbReference type="GO" id="GO:0031265">
    <property type="term" value="C:CD95 death-inducing signaling complex"/>
    <property type="evidence" value="ECO:0000314"/>
    <property type="project" value="UniProtKB"/>
</dbReference>
<dbReference type="GO" id="GO:0009986">
    <property type="term" value="C:cell surface"/>
    <property type="evidence" value="ECO:0000314"/>
    <property type="project" value="UniProtKB"/>
</dbReference>
<dbReference type="GO" id="GO:0005829">
    <property type="term" value="C:cytosol"/>
    <property type="evidence" value="ECO:0000314"/>
    <property type="project" value="HPA"/>
</dbReference>
<dbReference type="GO" id="GO:0031264">
    <property type="term" value="C:death-inducing signaling complex"/>
    <property type="evidence" value="ECO:0000314"/>
    <property type="project" value="UniProtKB"/>
</dbReference>
<dbReference type="GO" id="GO:0009897">
    <property type="term" value="C:external side of plasma membrane"/>
    <property type="evidence" value="ECO:0000318"/>
    <property type="project" value="GO_Central"/>
</dbReference>
<dbReference type="GO" id="GO:0070062">
    <property type="term" value="C:extracellular exosome"/>
    <property type="evidence" value="ECO:0007005"/>
    <property type="project" value="UniProtKB"/>
</dbReference>
<dbReference type="GO" id="GO:0045121">
    <property type="term" value="C:membrane raft"/>
    <property type="evidence" value="ECO:0000314"/>
    <property type="project" value="UniProtKB"/>
</dbReference>
<dbReference type="GO" id="GO:0016604">
    <property type="term" value="C:nuclear body"/>
    <property type="evidence" value="ECO:0000314"/>
    <property type="project" value="HPA"/>
</dbReference>
<dbReference type="GO" id="GO:0005886">
    <property type="term" value="C:plasma membrane"/>
    <property type="evidence" value="ECO:0000314"/>
    <property type="project" value="HPA"/>
</dbReference>
<dbReference type="GO" id="GO:0005516">
    <property type="term" value="F:calmodulin binding"/>
    <property type="evidence" value="ECO:0000314"/>
    <property type="project" value="UniProtKB"/>
</dbReference>
<dbReference type="GO" id="GO:0042802">
    <property type="term" value="F:identical protein binding"/>
    <property type="evidence" value="ECO:0000353"/>
    <property type="project" value="IntAct"/>
</dbReference>
<dbReference type="GO" id="GO:0019900">
    <property type="term" value="F:kinase binding"/>
    <property type="evidence" value="ECO:0000353"/>
    <property type="project" value="BHF-UCL"/>
</dbReference>
<dbReference type="GO" id="GO:0038023">
    <property type="term" value="F:signaling receptor activity"/>
    <property type="evidence" value="ECO:0000304"/>
    <property type="project" value="ProtInc"/>
</dbReference>
<dbReference type="GO" id="GO:0005031">
    <property type="term" value="F:tumor necrosis factor receptor activity"/>
    <property type="evidence" value="ECO:0000314"/>
    <property type="project" value="BHF-UCL"/>
</dbReference>
<dbReference type="GO" id="GO:0006924">
    <property type="term" value="P:activation-induced cell death of T cells"/>
    <property type="evidence" value="ECO:0000318"/>
    <property type="project" value="GO_Central"/>
</dbReference>
<dbReference type="GO" id="GO:0006915">
    <property type="term" value="P:apoptotic process"/>
    <property type="evidence" value="ECO:0000314"/>
    <property type="project" value="MGI"/>
</dbReference>
<dbReference type="GO" id="GO:0034198">
    <property type="term" value="P:cellular response to amino acid starvation"/>
    <property type="evidence" value="ECO:0000315"/>
    <property type="project" value="CAFA"/>
</dbReference>
<dbReference type="GO" id="GO:0071455">
    <property type="term" value="P:cellular response to hyperoxia"/>
    <property type="evidence" value="ECO:0000315"/>
    <property type="project" value="UniProtKB"/>
</dbReference>
<dbReference type="GO" id="GO:0071260">
    <property type="term" value="P:cellular response to mechanical stimulus"/>
    <property type="evidence" value="ECO:0000270"/>
    <property type="project" value="UniProtKB"/>
</dbReference>
<dbReference type="GO" id="GO:0097191">
    <property type="term" value="P:extrinsic apoptotic signaling pathway"/>
    <property type="evidence" value="ECO:0000315"/>
    <property type="project" value="UniProtKB"/>
</dbReference>
<dbReference type="GO" id="GO:0008625">
    <property type="term" value="P:extrinsic apoptotic signaling pathway via death domain receptors"/>
    <property type="evidence" value="ECO:0000314"/>
    <property type="project" value="BHF-UCL"/>
</dbReference>
<dbReference type="GO" id="GO:0036337">
    <property type="term" value="P:Fas signaling pathway"/>
    <property type="evidence" value="ECO:0000314"/>
    <property type="project" value="BHF-UCL"/>
</dbReference>
<dbReference type="GO" id="GO:0006955">
    <property type="term" value="P:immune response"/>
    <property type="evidence" value="ECO:0007669"/>
    <property type="project" value="InterPro"/>
</dbReference>
<dbReference type="GO" id="GO:0097049">
    <property type="term" value="P:motor neuron apoptotic process"/>
    <property type="evidence" value="ECO:0000318"/>
    <property type="project" value="GO_Central"/>
</dbReference>
<dbReference type="GO" id="GO:0097527">
    <property type="term" value="P:necroptotic signaling pathway"/>
    <property type="evidence" value="ECO:0000315"/>
    <property type="project" value="BHF-UCL"/>
</dbReference>
<dbReference type="GO" id="GO:0043066">
    <property type="term" value="P:negative regulation of apoptotic process"/>
    <property type="evidence" value="ECO:0000318"/>
    <property type="project" value="GO_Central"/>
</dbReference>
<dbReference type="GO" id="GO:0043065">
    <property type="term" value="P:positive regulation of apoptotic process"/>
    <property type="evidence" value="ECO:0000314"/>
    <property type="project" value="UniProtKB"/>
</dbReference>
<dbReference type="GO" id="GO:2001235">
    <property type="term" value="P:positive regulation of apoptotic signaling pathway"/>
    <property type="evidence" value="ECO:0000315"/>
    <property type="project" value="CAFA"/>
</dbReference>
<dbReference type="GO" id="GO:1903428">
    <property type="term" value="P:positive regulation of reactive oxygen species biosynthetic process"/>
    <property type="evidence" value="ECO:0000314"/>
    <property type="project" value="BHF-UCL"/>
</dbReference>
<dbReference type="GO" id="GO:0065003">
    <property type="term" value="P:protein-containing complex assembly"/>
    <property type="evidence" value="ECO:0000304"/>
    <property type="project" value="ProtInc"/>
</dbReference>
<dbReference type="GO" id="GO:0042981">
    <property type="term" value="P:regulation of apoptotic process"/>
    <property type="evidence" value="ECO:0000303"/>
    <property type="project" value="UniProtKB"/>
</dbReference>
<dbReference type="GO" id="GO:0032872">
    <property type="term" value="P:regulation of stress-activated MAPK cascade"/>
    <property type="evidence" value="ECO:0000315"/>
    <property type="project" value="CAFA"/>
</dbReference>
<dbReference type="GO" id="GO:0007165">
    <property type="term" value="P:signal transduction"/>
    <property type="evidence" value="ECO:0000304"/>
    <property type="project" value="ProtInc"/>
</dbReference>
<dbReference type="CDD" id="cd08316">
    <property type="entry name" value="Death_FAS_TNFRSF6"/>
    <property type="match status" value="1"/>
</dbReference>
<dbReference type="CDD" id="cd10579">
    <property type="entry name" value="TNFRSF6"/>
    <property type="match status" value="1"/>
</dbReference>
<dbReference type="FunFam" id="1.10.533.10:FF:000057">
    <property type="entry name" value="Tumor necrosis factor receptor superfamily member 6"/>
    <property type="match status" value="1"/>
</dbReference>
<dbReference type="FunFam" id="2.10.50.10:FF:000021">
    <property type="entry name" value="Tumor necrosis factor receptor superfamily member 6"/>
    <property type="match status" value="1"/>
</dbReference>
<dbReference type="Gene3D" id="1.10.533.10">
    <property type="entry name" value="Death Domain, Fas"/>
    <property type="match status" value="1"/>
</dbReference>
<dbReference type="Gene3D" id="2.10.50.10">
    <property type="entry name" value="Tumor Necrosis Factor Receptor, subunit A, domain 2"/>
    <property type="match status" value="2"/>
</dbReference>
<dbReference type="InterPro" id="IPR011029">
    <property type="entry name" value="DEATH-like_dom_sf"/>
</dbReference>
<dbReference type="InterPro" id="IPR000488">
    <property type="entry name" value="Death_dom"/>
</dbReference>
<dbReference type="InterPro" id="IPR008063">
    <property type="entry name" value="Fas_rcpt"/>
</dbReference>
<dbReference type="InterPro" id="IPR001368">
    <property type="entry name" value="TNFR/NGFR_Cys_rich_reg"/>
</dbReference>
<dbReference type="InterPro" id="IPR033998">
    <property type="entry name" value="TNFRSF6_death"/>
</dbReference>
<dbReference type="InterPro" id="IPR033999">
    <property type="entry name" value="TNFRSF6_N"/>
</dbReference>
<dbReference type="PANTHER" id="PTHR46874">
    <property type="entry name" value="TUMOR NECROSIS FACTOR RECEPTOR SUPERFAMILY MEMBER 6"/>
    <property type="match status" value="1"/>
</dbReference>
<dbReference type="PANTHER" id="PTHR46874:SF1">
    <property type="entry name" value="TUMOR NECROSIS FACTOR RECEPTOR SUPERFAMILY MEMBER 6"/>
    <property type="match status" value="1"/>
</dbReference>
<dbReference type="Pfam" id="PF00531">
    <property type="entry name" value="Death"/>
    <property type="match status" value="1"/>
</dbReference>
<dbReference type="Pfam" id="PF00020">
    <property type="entry name" value="TNFR_c6"/>
    <property type="match status" value="2"/>
</dbReference>
<dbReference type="PRINTS" id="PR01680">
    <property type="entry name" value="TNFACTORR6"/>
</dbReference>
<dbReference type="SMART" id="SM00005">
    <property type="entry name" value="DEATH"/>
    <property type="match status" value="1"/>
</dbReference>
<dbReference type="SMART" id="SM00208">
    <property type="entry name" value="TNFR"/>
    <property type="match status" value="3"/>
</dbReference>
<dbReference type="SUPFAM" id="SSF47986">
    <property type="entry name" value="DEATH domain"/>
    <property type="match status" value="1"/>
</dbReference>
<dbReference type="SUPFAM" id="SSF57586">
    <property type="entry name" value="TNF receptor-like"/>
    <property type="match status" value="2"/>
</dbReference>
<dbReference type="PROSITE" id="PS50017">
    <property type="entry name" value="DEATH_DOMAIN"/>
    <property type="match status" value="1"/>
</dbReference>
<dbReference type="PROSITE" id="PS00652">
    <property type="entry name" value="TNFR_NGFR_1"/>
    <property type="match status" value="2"/>
</dbReference>
<dbReference type="PROSITE" id="PS50050">
    <property type="entry name" value="TNFR_NGFR_2"/>
    <property type="match status" value="2"/>
</dbReference>
<accession>P25445</accession>
<accession>A9UJX4</accession>
<accession>B6VNV4</accession>
<accession>Q14292</accession>
<accession>Q14293</accession>
<accession>Q14294</accession>
<accession>Q14295</accession>
<accession>Q16652</accession>
<accession>Q5T9P1</accession>
<accession>Q5T9P2</accession>
<accession>Q5T9P3</accession>
<accession>Q6SSE9</accession>
<organism>
    <name type="scientific">Homo sapiens</name>
    <name type="common">Human</name>
    <dbReference type="NCBI Taxonomy" id="9606"/>
    <lineage>
        <taxon>Eukaryota</taxon>
        <taxon>Metazoa</taxon>
        <taxon>Chordata</taxon>
        <taxon>Craniata</taxon>
        <taxon>Vertebrata</taxon>
        <taxon>Euteleostomi</taxon>
        <taxon>Mammalia</taxon>
        <taxon>Eutheria</taxon>
        <taxon>Euarchontoglires</taxon>
        <taxon>Primates</taxon>
        <taxon>Haplorrhini</taxon>
        <taxon>Catarrhini</taxon>
        <taxon>Hominidae</taxon>
        <taxon>Homo</taxon>
    </lineage>
</organism>